<reference evidence="45" key="1">
    <citation type="journal article" date="1998" name="Science">
        <title>Expression of a gene cluster kaiABC as a circadian feedback process in cyanobacteria.</title>
        <authorList>
            <person name="Ishiura M."/>
            <person name="Kutsuna S."/>
            <person name="Aoki S."/>
            <person name="Iwasaki H."/>
            <person name="Andersson C.R."/>
            <person name="Tanabe A."/>
            <person name="Golden S.S."/>
            <person name="Johnson C.H."/>
            <person name="Kondo T."/>
        </authorList>
    </citation>
    <scope>NUCLEOTIDE SEQUENCE [GENOMIC DNA]</scope>
    <scope>FUNCTION</scope>
    <scope>INDUCTION</scope>
    <scope>DISRUPTION PHENOTYPE</scope>
    <scope>MUTAGENESIS OF ALA-87; SER-157; ARG-215; PRO-236; PRO-248; ARG-253; MET-273; ARG-321; THR-409; GLY-421; ALA-422; TYR-442; GLY-460 AND THR-495</scope>
    <source>
        <strain>ATCC 33912 / PCC 7942 / FACHB-805</strain>
    </source>
</reference>
<reference evidence="43" key="2">
    <citation type="submission" date="2002-06" db="EMBL/GenBank/DDBJ databases">
        <title>Synechococcus elongatus PCC7942 cosmid 7G3.</title>
        <authorList>
            <person name="Holtman C.K."/>
            <person name="Sandoval P."/>
            <person name="Chen Y."/>
            <person name="Socias T."/>
            <person name="Mohler B.J."/>
            <person name="McMurtry S."/>
            <person name="Gonzalez A."/>
            <person name="Salinas I."/>
            <person name="Golden S.S."/>
            <person name="Youderian P."/>
        </authorList>
    </citation>
    <scope>NUCLEOTIDE SEQUENCE [GENOMIC DNA]</scope>
    <source>
        <strain>ATCC 33912 / PCC 7942 / FACHB-805</strain>
    </source>
</reference>
<reference evidence="44" key="3">
    <citation type="submission" date="2005-08" db="EMBL/GenBank/DDBJ databases">
        <title>Complete sequence of chromosome 1 of Synechococcus elongatus PCC 7942.</title>
        <authorList>
            <consortium name="US DOE Joint Genome Institute"/>
            <person name="Copeland A."/>
            <person name="Lucas S."/>
            <person name="Lapidus A."/>
            <person name="Barry K."/>
            <person name="Detter J.C."/>
            <person name="Glavina T."/>
            <person name="Hammon N."/>
            <person name="Israni S."/>
            <person name="Pitluck S."/>
            <person name="Schmutz J."/>
            <person name="Larimer F."/>
            <person name="Land M."/>
            <person name="Kyrpides N."/>
            <person name="Lykidis A."/>
            <person name="Golden S."/>
            <person name="Richardson P."/>
        </authorList>
    </citation>
    <scope>NUCLEOTIDE SEQUENCE [LARGE SCALE GENOMIC DNA]</scope>
    <source>
        <strain>ATCC 33912 / PCC 7942 / FACHB-805</strain>
    </source>
</reference>
<reference key="4">
    <citation type="journal article" date="2004" name="Proc. Natl. Acad. Sci. U.S.A.">
        <title>Role of KaiC phosphorylation in the circadian clock system of Synechococcus elongatus PCC 7942.</title>
        <authorList>
            <person name="Nishiwaki T."/>
            <person name="Satomi Y."/>
            <person name="Nakajima M."/>
            <person name="Lee C."/>
            <person name="Kiyohara R."/>
            <person name="Kageyama H."/>
            <person name="Kitayama Y."/>
            <person name="Temamoto M."/>
            <person name="Yamaguchi A."/>
            <person name="Hijikata A."/>
            <person name="Go M."/>
            <person name="Iwasaki H."/>
            <person name="Takao T."/>
            <person name="Kondo T."/>
        </authorList>
    </citation>
    <scope>PROTEIN SEQUENCE OF 427-434</scope>
    <scope>CATALYTIC ACTIVITY</scope>
    <scope>ACTIVITY REGULATION</scope>
    <scope>SUBUNIT</scope>
    <scope>PHOSPHORYLATION AT SER-431 AND THR-432</scope>
    <scope>MUTAGENESIS OF 431-SER-THR-432; SER-431 AND THR-432</scope>
    <source>
        <strain>ATCC 33912 / PCC 7942 / FACHB-805</strain>
    </source>
</reference>
<reference key="5">
    <citation type="journal article" date="1999" name="EMBO J.">
        <title>Physical interactions among circadian clock proteins KaiA, KaiB and KaiC in cyanobacteria.</title>
        <authorList>
            <person name="Iwasaki H."/>
            <person name="Taniguchi Y."/>
            <person name="Ishiura M."/>
            <person name="Kondo T."/>
        </authorList>
    </citation>
    <scope>INTERACTION WITH KAIA AND KAIB</scope>
    <source>
        <strain>ATCC 33912 / PCC 7942 / FACHB-805</strain>
    </source>
</reference>
<reference key="6">
    <citation type="journal article" date="2000" name="Proc. Natl. Acad. Sci. U.S.A.">
        <title>Nucleotide binding and autophosphorylation of the clock protein KaiC as a circadian timing process of cyanobacteria.</title>
        <authorList>
            <person name="Nishiwaki T."/>
            <person name="Iwasaki H."/>
            <person name="Ishiura M."/>
            <person name="Kondo T."/>
        </authorList>
    </citation>
    <scope>FUNCTION AS AN AUTOKINASE</scope>
    <scope>CATALYTIC ACTIVITY</scope>
    <scope>ATP-BINDING</scope>
    <scope>AUTOPHOSPHORYLATION</scope>
    <scope>MUTAGENESIS OF LYS-52; GLY-71; GLY-114; GLN-115 AND LYS-294</scope>
    <source>
        <strain>ATCC 33912 / PCC 7942 / FACHB-805</strain>
    </source>
</reference>
<reference key="7">
    <citation type="journal article" date="2000" name="Cell">
        <title>A kaiC-interacting sensory histidine kinase, SasA, necessary to sustain robust circadian oscillation in cyanobacteria.</title>
        <authorList>
            <person name="Iwasaki H."/>
            <person name="Williams S.B."/>
            <person name="Kitayama Y."/>
            <person name="Ishiura M."/>
            <person name="Golden S.S."/>
            <person name="Kondo T."/>
        </authorList>
    </citation>
    <scope>INTERACTION WITH SASA AND WITH KAIB</scope>
    <source>
        <strain>ATCC 33912 / PCC 7942 / FACHB-805</strain>
    </source>
</reference>
<reference key="8">
    <citation type="journal article" date="2001" name="FEBS Lett.">
        <title>Two KaiA-binding domains of cyanobacterial circadian clock protein KaiC.</title>
        <authorList>
            <person name="Taniguchi Y."/>
            <person name="Yamaguchi A."/>
            <person name="Hijikata A."/>
            <person name="Iwasaki H."/>
            <person name="Kamagata K."/>
            <person name="Ishiura M."/>
            <person name="Go M."/>
            <person name="Kondo T."/>
        </authorList>
    </citation>
    <scope>INTERACTION WITH KAIA</scope>
    <scope>MUTAGENESIS OF ARG-215; PRO-248; GLY-421 AND TYR-442</scope>
    <source>
        <strain>ATCC 33912 / PCC 7942 / FACHB-805</strain>
    </source>
</reference>
<reference key="9">
    <citation type="journal article" date="2002" name="Proc. Natl. Acad. Sci. U.S.A.">
        <title>KaiA-stimulated KaiC phosphorylation in circadian timing loops in cyanobacteria.</title>
        <authorList>
            <person name="Iwasaki H."/>
            <person name="Nishiwaki T."/>
            <person name="Kitayama Y."/>
            <person name="Nakajima M."/>
            <person name="Kondo T."/>
        </authorList>
    </citation>
    <scope>PHOSPHORYLATION</scope>
    <scope>ACTIVITY REGULATION</scope>
    <scope>MUTAGENESIS OF ALA-422</scope>
    <source>
        <strain>ATCC 33912 / PCC 7942 / FACHB-805</strain>
    </source>
</reference>
<reference key="10">
    <citation type="journal article" date="2002" name="Proc. Natl. Acad. Sci. U.S.A.">
        <title>Circadian clock protein KaiC forms ATP-dependent hexameric rings and binds DNA.</title>
        <authorList>
            <person name="Mori T."/>
            <person name="Saveliev S.V."/>
            <person name="Xu Y."/>
            <person name="Stafford W.F."/>
            <person name="Cox M.M."/>
            <person name="Inman R.B."/>
            <person name="Johnson C.H."/>
        </authorList>
    </citation>
    <scope>HEXAMERIZATION</scope>
    <scope>DNA-BINDING</scope>
    <scope>ATP-BINDING</scope>
</reference>
<reference key="11">
    <citation type="journal article" date="2003" name="EMBO J.">
        <title>Cyanobacterial circadian clockwork: roles of KaiA, KaiB and the kaiBC promoter in regulating KaiC.</title>
        <authorList>
            <person name="Xu Y."/>
            <person name="Mori T."/>
            <person name="Johnson C.H."/>
        </authorList>
    </citation>
    <scope>CATALYTIC ACTIVITY</scope>
    <scope>ACTIVITY REGULATION</scope>
    <scope>AUTOPHOSPHORYLATION</scope>
    <scope>AUTOPHOSPHATASE</scope>
    <scope>INTERACTION WITH KAIB</scope>
</reference>
<reference key="12">
    <citation type="journal article" date="2003" name="EMBO J.">
        <title>KaiB functions as an attenuator of KaiC phosphorylation in the cyanobacterial circadian clock system.</title>
        <authorList>
            <person name="Kitayama Y."/>
            <person name="Iwasaki H."/>
            <person name="Nishiwaki T."/>
            <person name="Kondo T."/>
        </authorList>
    </citation>
    <scope>ACTIVITY REGULATION</scope>
    <scope>PHOSPHORYLATION</scope>
    <scope>INTERACTION WITH KAIB</scope>
</reference>
<reference key="13">
    <citation type="journal article" date="2004" name="Proc. Natl. Acad. Sci. U.S.A.">
        <title>Global gene repression by KaiC as a master process of prokaryotic circadian system.</title>
        <authorList>
            <person name="Nakahira Y."/>
            <person name="Katayama M."/>
            <person name="Miyashita H."/>
            <person name="Kutsuna S."/>
            <person name="Iwasaki H."/>
            <person name="Oyama T."/>
            <person name="Kondo T."/>
        </authorList>
    </citation>
    <scope>FUNCTION OF THE KAIABC COMPLEX</scope>
    <scope>INDUCTION</scope>
</reference>
<reference key="14">
    <citation type="journal article" date="2004" name="Biochem. Biophys. Res. Commun.">
        <title>Stoichiometric interactions between cyanobacterial clock proteins KaiA and KaiC.</title>
        <authorList>
            <person name="Hayashi F."/>
            <person name="Ito H."/>
            <person name="Fujita M."/>
            <person name="Iwase R."/>
            <person name="Uzumaki T."/>
            <person name="Ishiura M."/>
        </authorList>
    </citation>
    <scope>STOICHIOMETRY OF THE COMPLEX FORMED WITH KAIA</scope>
</reference>
<reference key="15">
    <citation type="journal article" date="2004" name="J. Biol. Chem.">
        <title>Circadian rhythms in the synthesis and degradation of a master clock protein kaiC in cyanobacteria.</title>
        <authorList>
            <person name="Imai K."/>
            <person name="Nishiwaki T."/>
            <person name="Kondo T."/>
            <person name="Iwasaki H."/>
        </authorList>
    </citation>
    <scope>DEVELOPMENTAL STAGE</scope>
</reference>
<reference key="16">
    <citation type="journal article" date="2005" name="Science">
        <title>Reconstitution of circadian oscillation of cyanobacterial KaiC phosphorylation in vitro.</title>
        <authorList>
            <person name="Nakajima M."/>
            <person name="Imai K."/>
            <person name="Ito H."/>
            <person name="Nishiwaki T."/>
            <person name="Murayama Y."/>
            <person name="Iwasaki H."/>
            <person name="Oyama T."/>
            <person name="Kondo T."/>
        </authorList>
    </citation>
    <scope>FUNCTION</scope>
    <scope>RECONSTITUTION OF KAIABC OSCILLATOR</scope>
    <scope>MUTAGENESIS OF THR-42; SER-157 AND PHE-470</scope>
    <source>
        <strain>ATCC 33912 / PCC 7942 / FACHB-805</strain>
    </source>
</reference>
<reference key="17">
    <citation type="journal article" date="2006" name="Proc. Natl. Acad. Sci. U.S.A.">
        <title>Circadian rhythms in gene transcription imparted by chromosome compaction in the cyanobacterium Synechococcus elongatus.</title>
        <authorList>
            <person name="Smith R.M."/>
            <person name="Williams S.B."/>
        </authorList>
    </citation>
    <scope>FUNCTION IN CHROMOSOME CONDENSATION</scope>
    <scope>DISRUPTION PHENOTYPE</scope>
    <scope>MUTAGENESIS OF THR-495</scope>
    <source>
        <strain>ATCC 33912 / PCC 7942 / FACHB-805</strain>
    </source>
</reference>
<reference key="18">
    <citation type="journal article" date="2006" name="Proc. Natl. Acad. Sci. U.S.A.">
        <title>A KaiC-associating SasA-RpaA two-component regulatory system as a major circadian timing mediator in cyanobacteria.</title>
        <authorList>
            <person name="Takai N."/>
            <person name="Nakajima M."/>
            <person name="Oyama T."/>
            <person name="Kito R."/>
            <person name="Sugita C."/>
            <person name="Sugita M."/>
            <person name="Kondo T."/>
            <person name="Iwasaki H."/>
        </authorList>
    </citation>
    <scope>FUNCTION</scope>
    <source>
        <strain>ATCC 33912 / PCC 7942 / FACHB-805</strain>
    </source>
</reference>
<reference key="19">
    <citation type="journal article" date="2006" name="Proc. Natl. Acad. Sci. U.S.A.">
        <title>Quinone sensing by the circadian input kinase of the cyanobacterial circadian clock.</title>
        <authorList>
            <person name="Ivleva N.B."/>
            <person name="Gao T."/>
            <person name="LiWang A.C."/>
            <person name="Golden S.S."/>
        </authorList>
    </citation>
    <scope>COPURIFIES WITH CIKA</scope>
    <source>
        <strain>ATCC 33912 / PCC 7942 / FACHB-805</strain>
    </source>
</reference>
<reference key="20">
    <citation type="journal article" date="2007" name="Genes Dev.">
        <title>labA: a novel gene required for negative feedback regulation of the cyanobacterial circadian clock protein KaiC.</title>
        <authorList>
            <person name="Taniguchi Y."/>
            <person name="Katayama M."/>
            <person name="Ito R."/>
            <person name="Takai N."/>
            <person name="Kondo T."/>
            <person name="Oyama T."/>
        </authorList>
    </citation>
    <scope>INDUCTION</scope>
    <source>
        <strain>ATCC 33912 / PCC 7942 / FACHB-805</strain>
    </source>
</reference>
<reference key="21">
    <citation type="journal article" date="2007" name="EMBO J.">
        <title>A sequential program of dual phosphorylation of KaiC as a basis for circadian rhythm in cyanobacteria.</title>
        <authorList>
            <person name="Nishiwaki T."/>
            <person name="Satomi Y."/>
            <person name="Kitayama Y."/>
            <person name="Terauchi K."/>
            <person name="Kiyohara R."/>
            <person name="Takao T."/>
            <person name="Kondo T."/>
        </authorList>
    </citation>
    <scope>FUNCTION</scope>
    <scope>INTERACTION WITH KAIB</scope>
    <scope>PHOSPHORYLATION AT SER-431 AND THR-432</scope>
    <scope>MUTAGENESIS OF SER-431 AND THR-432</scope>
    <source>
        <strain>ATCC 33912 / PCC 7942 / FACHB-805</strain>
    </source>
</reference>
<reference key="22">
    <citation type="journal article" date="2007" name="Proc. Natl. Acad. Sci. U.S.A.">
        <title>ATPase activity of KaiC determines the basic timing for circadian clock of cyanobacteria.</title>
        <authorList>
            <person name="Terauchi K."/>
            <person name="Kitayama Y."/>
            <person name="Nishiwaki T."/>
            <person name="Miwa K."/>
            <person name="Murayama Y."/>
            <person name="Oyama T."/>
            <person name="Kondo T."/>
        </authorList>
    </citation>
    <scope>ATPASE ACTIVITY</scope>
    <scope>BIOPHYSICOCHEMICAL PROPERTIES</scope>
    <scope>DOMAIN</scope>
    <scope>MUTAGENESIS OF THR-42; SER-157; ALA-251; ARG-393; 431-SER-THR-432 AND PHE-470</scope>
    <source>
        <strain>ATCC 33912 / PCC 7942 / FACHB-805</strain>
    </source>
</reference>
<reference key="23">
    <citation type="journal article" date="2007" name="Science">
        <title>Ordered phosphorylation governs oscillation of a three-protein circadian clock.</title>
        <authorList>
            <person name="Rust M.J."/>
            <person name="Markson J.S."/>
            <person name="Lane W.S."/>
            <person name="Fisher D.S."/>
            <person name="O'Shea E.K."/>
        </authorList>
    </citation>
    <scope>FUNCTION</scope>
    <scope>PHOSPHORYLATION AT SER-431 AND THR-432</scope>
    <source>
        <strain>ATCC 33912 / PCC 7942 / FACHB-805</strain>
    </source>
</reference>
<reference key="24">
    <citation type="journal article" date="2008" name="Proc. Natl. Acad. Sci. U.S.A.">
        <title>The day/night switch in KaiC, a central oscillator component of the circadian clock of cyanobacteria.</title>
        <authorList>
            <person name="Kim Y.I."/>
            <person name="Dong G."/>
            <person name="Carruthers C.W. Jr."/>
            <person name="Golden S.S."/>
            <person name="LiWang A."/>
        </authorList>
    </citation>
    <scope>ACTIVITY REGULATION</scope>
    <scope>DOMAIN</scope>
    <scope>MUTAGENESIS OF GLU-444; 487-GLU--SER-519; GLU-487; THR-495; 496-ARG--SER-519 AND 497-ILE--SER-519</scope>
</reference>
<reference key="25">
    <citation type="journal article" date="2010" name="Proc. Natl. Acad. Sci. U.S.A.">
        <title>Three major output pathways from the KaiABC-based oscillator cooperate to generate robust circadian kaiBC expression in cyanobacteria.</title>
        <authorList>
            <person name="Taniguchi Y."/>
            <person name="Takai N."/>
            <person name="Katayama M."/>
            <person name="Kondo T."/>
            <person name="Oyama T."/>
        </authorList>
    </citation>
    <scope>OUTPUT PATHWAYS</scope>
    <source>
        <strain>ATCC 33912 / PCC 7942 / FACHB-805</strain>
    </source>
</reference>
<reference key="26">
    <citation type="journal article" date="2013" name="Mol. Cell">
        <title>Two antagonistic clock-regulated histidine kinases time the activation of circadian gene expression.</title>
        <authorList>
            <person name="Gutu A."/>
            <person name="O'Shea E.K."/>
        </authorList>
    </citation>
    <scope>FUNCTION</scope>
    <source>
        <strain>ATCC 33912 / PCC 7942 / FACHB-805</strain>
    </source>
</reference>
<reference key="27">
    <citation type="journal article" date="2014" name="Proc. Natl. Acad. Sci. U.S.A.">
        <title>Insight into cyanobacterial circadian timing from structural details of the KaiB-KaiC interaction.</title>
        <authorList>
            <person name="Snijder J."/>
            <person name="Burnley R.J."/>
            <person name="Wiegard A."/>
            <person name="Melquiond A.S."/>
            <person name="Bonvin A.M."/>
            <person name="Axmann I.M."/>
            <person name="Heck A.J."/>
        </authorList>
    </citation>
    <scope>SUBUNIT</scope>
    <scope>INTERACTION WITH KAIB</scope>
</reference>
<reference key="28">
    <citation type="journal article" date="2015" name="Proc. Natl. Acad. Sci. U.S.A.">
        <title>The circadian oscillator in Synechococcus elongatus controls metabolite partitioning during diurnal growth.</title>
        <authorList>
            <person name="Diamond S."/>
            <person name="Jun D."/>
            <person name="Rubin B.E."/>
            <person name="Golden S.S."/>
        </authorList>
    </citation>
    <scope>FUNCTION</scope>
    <scope>DISRUPTION PHENOTYPE</scope>
    <scope>MUTAGENESIS OF SER-431</scope>
    <source>
        <strain>ATCC 33912 / PCC 7942 / FACHB-805 / AMC06</strain>
    </source>
</reference>
<reference key="29">
    <citation type="journal article" date="2015" name="Science">
        <title>Circadian rhythms. A protein fold switch joins the circadian oscillator to clock output in cyanobacteria.</title>
        <authorList>
            <person name="Chang Y.G."/>
            <person name="Cohen S.E."/>
            <person name="Phong C."/>
            <person name="Myers W.K."/>
            <person name="Kim Y.I."/>
            <person name="Tseng R."/>
            <person name="Lin J."/>
            <person name="Zhang L."/>
            <person name="Boyd J.S."/>
            <person name="Lee Y."/>
            <person name="Kang S."/>
            <person name="Lee D."/>
            <person name="Li S."/>
            <person name="Britt R.D."/>
            <person name="Rust M.J."/>
            <person name="Golden S.S."/>
            <person name="LiWang A."/>
        </authorList>
    </citation>
    <scope>SUBUNIT</scope>
    <source>
        <strain>ATCC 33912 / PCC 7942 / FACHB-805</strain>
    </source>
</reference>
<reference key="30">
    <citation type="journal article" date="2020" name="J. Bacteriol.">
        <title>Synechocystis KaiC3 Displays Temperature- and KaiB-Dependent ATPase Activity and Is Important for Growth in Darkness.</title>
        <authorList>
            <person name="Wiegard A."/>
            <person name="Koebler C."/>
            <person name="Oyama K."/>
            <person name="Doerrich A.K."/>
            <person name="Azai C."/>
            <person name="Terauchi K."/>
            <person name="Wilde A."/>
            <person name="Axmann I.M."/>
        </authorList>
    </citation>
    <scope>ATP SYNTHASE ACTIVITY</scope>
    <source>
        <strain>ATCC 33912 / PCC 7942 / FACHB-805</strain>
    </source>
</reference>
<reference key="31">
    <citation type="journal article" date="2021" name="Science">
        <title>Reconstitution of an intact clock reveals mechanisms of circadian timekeeping.</title>
        <authorList>
            <person name="Chavan A.G."/>
            <person name="Swan J.A."/>
            <person name="Heisler J."/>
            <person name="Sancar C."/>
            <person name="Ernst D.C."/>
            <person name="Fang M."/>
            <person name="Palacios J.G."/>
            <person name="Spangler R.K."/>
            <person name="Bagshaw C.R."/>
            <person name="Tripathi S."/>
            <person name="Crosby P."/>
            <person name="Golden S.S."/>
            <person name="Partch C.L."/>
            <person name="LiWang A."/>
        </authorList>
    </citation>
    <scope>CLOCK RECONSTITUTION</scope>
    <scope>FUNCTION</scope>
    <scope>SUBUNIT</scope>
    <source>
        <strain>ATCC 33912 / PCC 7942 / FACHB-805</strain>
    </source>
</reference>
<reference evidence="47" key="32">
    <citation type="journal article" date="2004" name="Mol. Cell">
        <title>Visualizing a circadian clock protein; crystal structure of kaiC and functional insights.</title>
        <authorList>
            <person name="Pattanayek R."/>
            <person name="Wang J."/>
            <person name="Mori T."/>
            <person name="Xu Y."/>
            <person name="Johnson C.H."/>
            <person name="Egli M."/>
        </authorList>
    </citation>
    <scope>X-RAY CRYSTALLOGRAPHY (2.8 ANGSTROMS) OF HEXAMER IN COMPLEX WITH ATP</scope>
    <scope>COFACTOR</scope>
    <scope>SUBUNIT</scope>
    <scope>DOMAIN</scope>
    <scope>PHOSPHORYLATION AT THR-432</scope>
    <scope>MUTAGENESIS OF THR-432</scope>
</reference>
<reference evidence="48" key="33">
    <citation type="journal article" date="2004" name="Proc. Natl. Acad. Sci. U.S.A.">
        <title>Identification of key phosphorylation sites in the circadian clock protein KaiC by crystallographic and mutagenetic analyses.</title>
        <authorList>
            <person name="Xu Y."/>
            <person name="Mori T."/>
            <person name="Pattanayek R."/>
            <person name="Pattanayek S."/>
            <person name="Egli M."/>
            <person name="Johnson C.H."/>
        </authorList>
    </citation>
    <scope>X-RAY CRYSTALLOGRAPHY (2.80 ANGSTROMS) OF HEXAMER IN COMPLEX WITH ATP</scope>
    <scope>CATALYTIC ACTIVITY</scope>
    <scope>SUBUNIT</scope>
    <scope>INDUCTION</scope>
    <scope>DOMAIN</scope>
    <scope>PHOSPHORYLATION AT SER-431 AND THR-432</scope>
    <scope>MUTAGENESIS OF 426-THR--SER-431; 426-THR--THR-432; THR-426; SER-431 AND THR-432</scope>
</reference>
<reference evidence="49" key="34">
    <citation type="journal article" date="2006" name="EMBO J.">
        <title>Analysis of KaiA-KaiC protein interactions in the cyano-bacterial circadian clock using hybrid structural methods.</title>
        <authorList>
            <person name="Pattanayek R."/>
            <person name="Williams D.R."/>
            <person name="Pattanayek S."/>
            <person name="Xu Y."/>
            <person name="Mori T."/>
            <person name="Johnson C.H."/>
            <person name="Stewart P.L."/>
            <person name="Egli M."/>
        </authorList>
    </citation>
    <scope>X-RAY CRYSTALLOGRAPHY (2.80 ANGSTROMS) OF HEXAMER IN COMPLEX WITH ATP AND MG(2+)</scope>
    <scope>PHOSPHORYLATION AT SER-431 AND THR-432</scope>
</reference>
<reference evidence="50" key="35">
    <citation type="submission" date="2008-07" db="PDB data bank">
        <title>Crystal Structure of Full Length Circadian Clock Protein KaiC with Correct Geometry at Phosphorylation Sites.</title>
        <authorList>
            <person name="Pattanayek R."/>
            <person name="Williams D.R."/>
            <person name="Pattanayek S."/>
            <person name="Xu Y."/>
            <person name="Mori T."/>
            <person name="Johnson C.H."/>
            <person name="Stewart P.L."/>
            <person name="Egli M."/>
        </authorList>
    </citation>
    <scope>X-RAY CRYSTALLOGRAPHY (2.80 ANGSTROMS) OF HEXAMER IN COMPLEX WITH ATP AND MG(2+)</scope>
</reference>
<reference evidence="51" key="36">
    <citation type="journal article" date="2012" name="Biochemistry">
        <title>Dephosphorylation of the core clock protein KaiC in the cyanobacterial KaiABC circadian oscillator proceeds via an ATP synthase mechanism.</title>
        <authorList>
            <person name="Egli M."/>
            <person name="Mori T."/>
            <person name="Pattanayek R."/>
            <person name="Xu Y."/>
            <person name="Qin X."/>
            <person name="Johnson C.H."/>
        </authorList>
    </citation>
    <scope>X-RAY CRYSTALLOGRAPHY (3.29 ANGSTROMS) IN COMPLEX WITH ATP AND MG(2+)</scope>
    <scope>CATALYTIC ACTIVITY</scope>
    <scope>PROBABLE ACTIVE SITES</scope>
    <scope>COFACTOR</scope>
    <scope>SUBUNIT</scope>
    <scope>DOMAIN</scope>
    <scope>MUTAGENESIS OF 318-GLU-GLU-319; GLU-318; GLU-319; ASP-427 AND 431-SER-THR-432</scope>
</reference>
<reference key="37">
    <citation type="journal article" date="2013" name="J. Mol. Biol.">
        <title>CryoEM and molecular dynamics of the circadian KaiB-KaiC complex indicates that KaiB monomers interact with KaiC and block ATP binding clefts.</title>
        <authorList>
            <person name="Villarreal S.A."/>
            <person name="Pattanayek R."/>
            <person name="Williams D.R."/>
            <person name="Mori T."/>
            <person name="Qin X."/>
            <person name="Johnson C.H."/>
            <person name="Egli M."/>
            <person name="Stewart P.L."/>
        </authorList>
    </citation>
    <scope>STRUCTURE BY CRYO-ELECTRON MICROSCOPY (16.0 ANGSTROMS) OF 1-488 IN COMPLEX WITH KAIB</scope>
    <scope>SUBUNIT</scope>
    <scope>MUTAGENESIS OF ARG-468</scope>
    <source>
        <strain>ATCC 33912 / PCC 7942 / FACHB-805</strain>
    </source>
</reference>
<reference evidence="61" key="38">
    <citation type="journal article" date="2015" name="Biochemistry">
        <title>Protein-Protein Interactions in the Cyanobacterial Circadian Clock: Structure of KaiA Dimer in Complex with C-Terminal KaiC Peptides at 2.8 A Resolution.</title>
        <authorList>
            <person name="Pattanayek R."/>
            <person name="Egli M."/>
        </authorList>
    </citation>
    <scope>X-RAY CRYSTALLOGRAPHY (2.82 ANGSTROMS) OF 500-519 IN COMPLEX WITH KAIA</scope>
    <scope>SUBUNIT</scope>
    <scope>DOMAIN</scope>
</reference>
<reference evidence="52 53 54 55 56 57 58 59 60" key="39">
    <citation type="journal article" date="2015" name="Science">
        <title>Circadian rhythms. Atomic-scale origins of slowness in the cyanobacterial circadian clock.</title>
        <authorList>
            <person name="Abe J."/>
            <person name="Hiyama T.B."/>
            <person name="Mukaiyama A."/>
            <person name="Son S."/>
            <person name="Mori T."/>
            <person name="Saito S."/>
            <person name="Osako M."/>
            <person name="Wolanin J."/>
            <person name="Yamashita E."/>
            <person name="Kondo T."/>
            <person name="Akiyama S."/>
        </authorList>
    </citation>
    <scope>X-RAY CRYSTALLOGRAPHY (1.76 ANGSTROMS) OF 1-253 IN COMPLEX WITH ADP AND ATP</scope>
    <scope>FUNCTION</scope>
    <scope>DOMAIN</scope>
    <scope>MUTAGENESIS OF SER-146; GLN-153 AND SER-157</scope>
    <source>
        <strain>ATCC 33912 / PCC 7942 / FACHB-805</strain>
    </source>
</reference>
<reference evidence="62" key="40">
    <citation type="journal article" date="2017" name="Science">
        <title>Structures of the cyanobacterial circadian oscillator frozen in a fully assembled state.</title>
        <authorList>
            <person name="Snijder J."/>
            <person name="Schuller J.M."/>
            <person name="Wiegard A."/>
            <person name="Lossl P."/>
            <person name="Schmelling N."/>
            <person name="Axmann I.M."/>
            <person name="Plitzko J.M."/>
            <person name="Forster F."/>
            <person name="Heck A.J."/>
        </authorList>
    </citation>
    <scope>STRUCTURE BY ELECTRON MICROSCOPY (4.70 ANGSTROMS) OF OSCILLATOR COMPLEXES</scope>
    <scope>SUBUNIT</scope>
    <scope>MUTAGENESIS OF ALA-108</scope>
</reference>
<reference evidence="63" key="41">
    <citation type="journal article" date="2018" name="Sci. Rep.">
        <title>Conformational rearrangements of the C1 ring in KaiC measure the timing of assembly with KaiB.</title>
        <authorList>
            <person name="Mukaiyama A."/>
            <person name="Furuike Y."/>
            <person name="Abe J."/>
            <person name="Koda S.I."/>
            <person name="Yamashita E."/>
            <person name="Kondo T."/>
            <person name="Akiyama S."/>
        </authorList>
    </citation>
    <scope>X-RAY CRYSTALLOGRAPHY (2.81 ANGSTROMS) OF 1-254</scope>
    <scope>FUNCTION</scope>
    <scope>SUBUNIT</scope>
    <scope>DOMAIN</scope>
    <scope>MUTAGENESIS OF TRP-92; SER-146; SER-157; SER-229; TRP-331 AND TRP-462</scope>
</reference>
<reference evidence="69 70 71" key="42">
    <citation type="submission" date="2021-09" db="PDB data bank">
        <title>Hidden conformations differentiate day and night in a circadian pacemaker.</title>
        <authorList>
            <person name="Swan J.A."/>
            <person name="Sandate C.R."/>
            <person name="Chavan A.G."/>
            <person name="Freeberg A.M."/>
            <person name="Etwaru D."/>
            <person name="Palacios J.G."/>
            <person name="Golden S.S."/>
            <person name="Liwang A."/>
            <person name="Lander G.C."/>
            <person name="Partch C.L."/>
        </authorList>
    </citation>
    <scope>STRUCTURE BY ELECTRON MICROSCOPY (2.80 ANGSTROMS)</scope>
</reference>
<reference evidence="64 65 66 67 68 72" key="43">
    <citation type="journal article" date="2022" name="Sci. Adv.">
        <title>Elucidation of master allostery essential for circadian clock oscillation in cyanobacteria.</title>
        <authorList>
            <person name="Furuike Y."/>
            <person name="Mukaiyama A."/>
            <person name="Ouyang D."/>
            <person name="Ito-Miwa K."/>
            <person name="Simon D."/>
            <person name="Yamashita E."/>
            <person name="Kondo T."/>
            <person name="Akiyama S."/>
        </authorList>
    </citation>
    <scope>X-RAY CRYSTALLOGRAPHY (2.40 ANGSTROMS) IN COMPLEX WITH ATP AND MG(2+)</scope>
    <scope>FUNCTION</scope>
    <scope>REACTION MECHANISM</scope>
    <scope>SUBUNIT</scope>
    <scope>DOMAIN</scope>
    <scope>MUTAGENESIS OF GLN-394; SER-431 AND THR-432</scope>
    <source>
        <strain>ATCC 33912 / PCC 7942 / FACHB-805</strain>
    </source>
</reference>
<proteinExistence type="evidence at protein level"/>
<name>KAIC_SYNE7</name>
<gene>
    <name evidence="2 40" type="primary">kaiC</name>
    <name type="ordered locus">Synpcc7942_1216</name>
    <name type="ORF">see0011</name>
</gene>
<sequence>MTSAEMTSPNNNSEHQAIAKMRTMIEGFDDISHGGLPIGRSTLVSGTSGTGKTLFSIQFLYNGIIEFDEPGVFVTFEETPQDIIKNARSFGWDLAKLVDEGKLFILDASPDPEGQEVVGGFDLSALIERINYAIQKYRARRVSIDSVTSVFQQYDASSVVRRELFRLVARLKQIGATTVMTTERIEEYGPIARYGVEEFVSDNVVILRNVLEGERRRRTLEILKLRGTSHMKGEYPFTITDHGINIFPLGAMRLTQRSSNVRVSSGVVRLDEMCGGGFFKDSIILATGATGTGKTLLVSRFVENACANKERAILFAYEESRAQLLRNAYSWGMDFEEMERQNLLKIVCAYPESAGLEDHLQIIKSEINDFKPARIAIDSLSALARGVSNNAFRQFVIGVTGYAKQEEITGLFTNTSDQFMGAHSITDSHISTITDTIILLQYVEIRGEMSRAINVFKMRGSWHDKAIREFMISDKGPDIKDSFRNFERIISGSPTRITVDEKSELSRIVRGVQEKGPES</sequence>
<dbReference type="EC" id="2.7.11.1" evidence="2 4 8"/>
<dbReference type="EC" id="3.6.4.-" evidence="2 22"/>
<dbReference type="EMBL" id="AB010691">
    <property type="protein sequence ID" value="BAA37103.1"/>
    <property type="molecule type" value="Genomic_DNA"/>
</dbReference>
<dbReference type="EMBL" id="AY120853">
    <property type="protein sequence ID" value="AAM82686.1"/>
    <property type="molecule type" value="Genomic_DNA"/>
</dbReference>
<dbReference type="EMBL" id="CP000100">
    <property type="protein sequence ID" value="ABB57246.1"/>
    <property type="molecule type" value="Genomic_DNA"/>
</dbReference>
<dbReference type="PIR" id="T44269">
    <property type="entry name" value="T44269"/>
</dbReference>
<dbReference type="RefSeq" id="WP_011242648.1">
    <property type="nucleotide sequence ID" value="NZ_JACJTX010000003.1"/>
</dbReference>
<dbReference type="PDB" id="1TF7">
    <property type="method" value="X-ray"/>
    <property type="resolution" value="2.80 A"/>
    <property type="chains" value="A/B/C/D/E/F=1-519"/>
</dbReference>
<dbReference type="PDB" id="1U9I">
    <property type="method" value="X-ray"/>
    <property type="resolution" value="2.80 A"/>
    <property type="chains" value="A/B/C/D/E/F=1-519"/>
</dbReference>
<dbReference type="PDB" id="2GBL">
    <property type="method" value="X-ray"/>
    <property type="resolution" value="2.80 A"/>
    <property type="chains" value="A/B/C/D/E/F=1-519"/>
</dbReference>
<dbReference type="PDB" id="3DVL">
    <property type="method" value="X-ray"/>
    <property type="resolution" value="2.80 A"/>
    <property type="chains" value="A/B/C/D/E/F=1-519"/>
</dbReference>
<dbReference type="PDB" id="3JZM">
    <property type="method" value="X-ray"/>
    <property type="resolution" value="2.90 A"/>
    <property type="chains" value="A/B/C/D/E/F=1-519"/>
</dbReference>
<dbReference type="PDB" id="3K09">
    <property type="method" value="X-ray"/>
    <property type="resolution" value="3.20 A"/>
    <property type="chains" value="A/B/C/D/E/F=1-519"/>
</dbReference>
<dbReference type="PDB" id="3K0A">
    <property type="method" value="X-ray"/>
    <property type="resolution" value="3.00 A"/>
    <property type="chains" value="A/B/C/D/E/F=1-519"/>
</dbReference>
<dbReference type="PDB" id="3K0C">
    <property type="method" value="X-ray"/>
    <property type="resolution" value="3.30 A"/>
    <property type="chains" value="A/B/C/D/E/F=1-519"/>
</dbReference>
<dbReference type="PDB" id="3K0E">
    <property type="method" value="X-ray"/>
    <property type="resolution" value="3.20 A"/>
    <property type="chains" value="A/B/C/D/E/F=1-519"/>
</dbReference>
<dbReference type="PDB" id="3K0F">
    <property type="method" value="X-ray"/>
    <property type="resolution" value="3.00 A"/>
    <property type="chains" value="A/B/C/D/E/F=1-519"/>
</dbReference>
<dbReference type="PDB" id="3S1A">
    <property type="method" value="X-ray"/>
    <property type="resolution" value="3.00 A"/>
    <property type="chains" value="A/B/C/D/E/F=1-519"/>
</dbReference>
<dbReference type="PDB" id="4DUG">
    <property type="method" value="X-ray"/>
    <property type="resolution" value="3.30 A"/>
    <property type="chains" value="A/B/C/D/E/F=1-519"/>
</dbReference>
<dbReference type="PDB" id="4IJM">
    <property type="method" value="X-ray"/>
    <property type="resolution" value="3.35 A"/>
    <property type="chains" value="A/B/C/D/E/F=14-519"/>
</dbReference>
<dbReference type="PDB" id="4TL6">
    <property type="method" value="X-ray"/>
    <property type="resolution" value="1.76 A"/>
    <property type="chains" value="A/B/C=1-253"/>
</dbReference>
<dbReference type="PDB" id="4TL7">
    <property type="method" value="X-ray"/>
    <property type="resolution" value="1.94 A"/>
    <property type="chains" value="A/B/C/D/E/F=1-253"/>
</dbReference>
<dbReference type="PDB" id="4TL8">
    <property type="method" value="X-ray"/>
    <property type="resolution" value="1.86 A"/>
    <property type="chains" value="A/B/C/D/E/F=1-253"/>
</dbReference>
<dbReference type="PDB" id="4TL9">
    <property type="method" value="X-ray"/>
    <property type="resolution" value="1.82 A"/>
    <property type="chains" value="A/B/C/D/E/F=1-253"/>
</dbReference>
<dbReference type="PDB" id="4TLA">
    <property type="method" value="X-ray"/>
    <property type="resolution" value="1.80 A"/>
    <property type="chains" value="A/B/C/D/E/F=1-253"/>
</dbReference>
<dbReference type="PDB" id="4TLB">
    <property type="method" value="X-ray"/>
    <property type="resolution" value="1.98 A"/>
    <property type="chains" value="A/B/C/D/E/F=1-253"/>
</dbReference>
<dbReference type="PDB" id="4TLC">
    <property type="method" value="X-ray"/>
    <property type="resolution" value="2.09 A"/>
    <property type="chains" value="A/B/C/D/E/F=1-253"/>
</dbReference>
<dbReference type="PDB" id="4TLD">
    <property type="method" value="X-ray"/>
    <property type="resolution" value="1.95 A"/>
    <property type="chains" value="A/B/C/D/E/F=1-253"/>
</dbReference>
<dbReference type="PDB" id="4TLE">
    <property type="method" value="X-ray"/>
    <property type="resolution" value="1.94 A"/>
    <property type="chains" value="A/B/C/D/E/F=1-253"/>
</dbReference>
<dbReference type="PDB" id="5C5E">
    <property type="method" value="X-ray"/>
    <property type="resolution" value="2.82 A"/>
    <property type="chains" value="G/H=500-519"/>
</dbReference>
<dbReference type="PDB" id="5N8Y">
    <property type="method" value="EM"/>
    <property type="resolution" value="4.70 A"/>
    <property type="chains" value="A/B/C/D/E/F=1-519"/>
</dbReference>
<dbReference type="PDB" id="5YZ8">
    <property type="method" value="X-ray"/>
    <property type="resolution" value="2.81 A"/>
    <property type="chains" value="A/B/C/D/E/F=1-254"/>
</dbReference>
<dbReference type="PDB" id="7DXQ">
    <property type="method" value="X-ray"/>
    <property type="resolution" value="2.80 A"/>
    <property type="chains" value="A/B/C/D/E/F=1-519"/>
</dbReference>
<dbReference type="PDB" id="7DY2">
    <property type="method" value="X-ray"/>
    <property type="resolution" value="3.04 A"/>
    <property type="chains" value="A/B/C/D/E/F/G/H/I/J/K/L=1-519"/>
</dbReference>
<dbReference type="PDB" id="7DYE">
    <property type="method" value="X-ray"/>
    <property type="resolution" value="2.60 A"/>
    <property type="chains" value="A/B=1-519"/>
</dbReference>
<dbReference type="PDB" id="7DYI">
    <property type="method" value="X-ray"/>
    <property type="resolution" value="2.64 A"/>
    <property type="chains" value="A/B=1-519"/>
</dbReference>
<dbReference type="PDB" id="7DYJ">
    <property type="method" value="X-ray"/>
    <property type="resolution" value="2.40 A"/>
    <property type="chains" value="A/B=1-519"/>
</dbReference>
<dbReference type="PDB" id="7DYK">
    <property type="method" value="X-ray"/>
    <property type="resolution" value="2.99 A"/>
    <property type="chains" value="A/B=1-519"/>
</dbReference>
<dbReference type="PDB" id="7S65">
    <property type="method" value="EM"/>
    <property type="resolution" value="3.20 A"/>
    <property type="chains" value="A/B/C/D/E/F=1-519"/>
</dbReference>
<dbReference type="PDB" id="7S66">
    <property type="method" value="EM"/>
    <property type="resolution" value="2.80 A"/>
    <property type="chains" value="A/B/C/D/E/F=1-519"/>
</dbReference>
<dbReference type="PDB" id="7S67">
    <property type="method" value="EM"/>
    <property type="resolution" value="3.80 A"/>
    <property type="chains" value="A/B/C/D/E/F=1-519"/>
</dbReference>
<dbReference type="PDB" id="7V3X">
    <property type="method" value="X-ray"/>
    <property type="resolution" value="3.10 A"/>
    <property type="chains" value="A/B/C/D/E/F/G/H/I/J/K/L/M/N/O/P/Q/R/S/T/U/V/W/X=1-519"/>
</dbReference>
<dbReference type="PDB" id="7WDC">
    <property type="method" value="X-ray"/>
    <property type="resolution" value="2.84 A"/>
    <property type="chains" value="A/B=1-519"/>
</dbReference>
<dbReference type="PDB" id="7X1Y">
    <property type="method" value="EM"/>
    <property type="resolution" value="3.30 A"/>
    <property type="chains" value="A/B/C/D/E/F=14-484"/>
</dbReference>
<dbReference type="PDB" id="7X1Z">
    <property type="method" value="EM"/>
    <property type="resolution" value="3.30 A"/>
    <property type="chains" value="A/B/C/D/E/F=14-497"/>
</dbReference>
<dbReference type="PDB" id="8JON">
    <property type="method" value="EM"/>
    <property type="resolution" value="2.51 A"/>
    <property type="chains" value="A/B/C/D/E/F=20-504"/>
</dbReference>
<dbReference type="PDB" id="8WV8">
    <property type="method" value="X-ray"/>
    <property type="resolution" value="2.93 A"/>
    <property type="chains" value="A/B=1-519"/>
</dbReference>
<dbReference type="PDB" id="8WVE">
    <property type="method" value="X-ray"/>
    <property type="resolution" value="2.73 A"/>
    <property type="chains" value="A/B=1-519"/>
</dbReference>
<dbReference type="PDBsum" id="1TF7"/>
<dbReference type="PDBsum" id="1U9I"/>
<dbReference type="PDBsum" id="2GBL"/>
<dbReference type="PDBsum" id="3DVL"/>
<dbReference type="PDBsum" id="3JZM"/>
<dbReference type="PDBsum" id="3K09"/>
<dbReference type="PDBsum" id="3K0A"/>
<dbReference type="PDBsum" id="3K0C"/>
<dbReference type="PDBsum" id="3K0E"/>
<dbReference type="PDBsum" id="3K0F"/>
<dbReference type="PDBsum" id="3S1A"/>
<dbReference type="PDBsum" id="4DUG"/>
<dbReference type="PDBsum" id="4IJM"/>
<dbReference type="PDBsum" id="4TL6"/>
<dbReference type="PDBsum" id="4TL7"/>
<dbReference type="PDBsum" id="4TL8"/>
<dbReference type="PDBsum" id="4TL9"/>
<dbReference type="PDBsum" id="4TLA"/>
<dbReference type="PDBsum" id="4TLB"/>
<dbReference type="PDBsum" id="4TLC"/>
<dbReference type="PDBsum" id="4TLD"/>
<dbReference type="PDBsum" id="4TLE"/>
<dbReference type="PDBsum" id="5C5E"/>
<dbReference type="PDBsum" id="5N8Y"/>
<dbReference type="PDBsum" id="5YZ8"/>
<dbReference type="PDBsum" id="7DXQ"/>
<dbReference type="PDBsum" id="7DY2"/>
<dbReference type="PDBsum" id="7DYE"/>
<dbReference type="PDBsum" id="7DYI"/>
<dbReference type="PDBsum" id="7DYJ"/>
<dbReference type="PDBsum" id="7DYK"/>
<dbReference type="PDBsum" id="7S65"/>
<dbReference type="PDBsum" id="7S66"/>
<dbReference type="PDBsum" id="7S67"/>
<dbReference type="PDBsum" id="7V3X"/>
<dbReference type="PDBsum" id="7WDC"/>
<dbReference type="PDBsum" id="7X1Y"/>
<dbReference type="PDBsum" id="7X1Z"/>
<dbReference type="PDBsum" id="8JON"/>
<dbReference type="PDBsum" id="8WV8"/>
<dbReference type="PDBsum" id="8WVE"/>
<dbReference type="EMDB" id="EMD-24850"/>
<dbReference type="EMDB" id="EMD-24851"/>
<dbReference type="EMDB" id="EMD-24852"/>
<dbReference type="EMDB" id="EMD-32952"/>
<dbReference type="EMDB" id="EMD-32953"/>
<dbReference type="EMDB" id="EMD-3602"/>
<dbReference type="EMDB" id="EMD-36461"/>
<dbReference type="EMDB" id="EMD-5672"/>
<dbReference type="SASBDB" id="Q79PF4"/>
<dbReference type="SMR" id="Q79PF4"/>
<dbReference type="DIP" id="DIP-33330N"/>
<dbReference type="IntAct" id="Q79PF4">
    <property type="interactions" value="3"/>
</dbReference>
<dbReference type="MINT" id="Q79PF4"/>
<dbReference type="STRING" id="1140.Synpcc7942_1216"/>
<dbReference type="iPTMnet" id="Q79PF4"/>
<dbReference type="PaxDb" id="1140-Synpcc7942_1216"/>
<dbReference type="GeneID" id="72430075"/>
<dbReference type="KEGG" id="syf:Synpcc7942_1216"/>
<dbReference type="eggNOG" id="COG0467">
    <property type="taxonomic scope" value="Bacteria"/>
</dbReference>
<dbReference type="HOGENOM" id="CLU_023669_4_1_3"/>
<dbReference type="OrthoDB" id="9787927at2"/>
<dbReference type="BioCyc" id="SYNEL:SYNPCC7942_1216-MONOMER"/>
<dbReference type="EvolutionaryTrace" id="Q79PF4"/>
<dbReference type="Proteomes" id="UP000889800">
    <property type="component" value="Chromosome"/>
</dbReference>
<dbReference type="GO" id="GO:0005524">
    <property type="term" value="F:ATP binding"/>
    <property type="evidence" value="ECO:0007669"/>
    <property type="project" value="UniProtKB-UniRule"/>
</dbReference>
<dbReference type="GO" id="GO:0016887">
    <property type="term" value="F:ATP hydrolysis activity"/>
    <property type="evidence" value="ECO:0007669"/>
    <property type="project" value="RHEA"/>
</dbReference>
<dbReference type="GO" id="GO:0003677">
    <property type="term" value="F:DNA binding"/>
    <property type="evidence" value="ECO:0007669"/>
    <property type="project" value="InterPro"/>
</dbReference>
<dbReference type="GO" id="GO:0042802">
    <property type="term" value="F:identical protein binding"/>
    <property type="evidence" value="ECO:0000353"/>
    <property type="project" value="IntAct"/>
</dbReference>
<dbReference type="GO" id="GO:0000287">
    <property type="term" value="F:magnesium ion binding"/>
    <property type="evidence" value="ECO:0007669"/>
    <property type="project" value="UniProtKB-UniRule"/>
</dbReference>
<dbReference type="GO" id="GO:0106310">
    <property type="term" value="F:protein serine kinase activity"/>
    <property type="evidence" value="ECO:0007669"/>
    <property type="project" value="RHEA"/>
</dbReference>
<dbReference type="GO" id="GO:0004674">
    <property type="term" value="F:protein serine/threonine kinase activity"/>
    <property type="evidence" value="ECO:0007669"/>
    <property type="project" value="UniProtKB-KW"/>
</dbReference>
<dbReference type="GO" id="GO:0004712">
    <property type="term" value="F:protein serine/threonine/tyrosine kinase activity"/>
    <property type="evidence" value="ECO:0007669"/>
    <property type="project" value="UniProtKB-UniRule"/>
</dbReference>
<dbReference type="GO" id="GO:0007623">
    <property type="term" value="P:circadian rhythm"/>
    <property type="evidence" value="ECO:0007669"/>
    <property type="project" value="UniProtKB-UniRule"/>
</dbReference>
<dbReference type="GO" id="GO:0009649">
    <property type="term" value="P:entrainment of circadian clock"/>
    <property type="evidence" value="ECO:0000314"/>
    <property type="project" value="UniProtKB"/>
</dbReference>
<dbReference type="GO" id="GO:0042754">
    <property type="term" value="P:negative regulation of circadian rhythm"/>
    <property type="evidence" value="ECO:0000315"/>
    <property type="project" value="CACAO"/>
</dbReference>
<dbReference type="GO" id="GO:0006355">
    <property type="term" value="P:regulation of DNA-templated transcription"/>
    <property type="evidence" value="ECO:0007669"/>
    <property type="project" value="InterPro"/>
</dbReference>
<dbReference type="GO" id="GO:0070297">
    <property type="term" value="P:regulation of phosphorelay signal transduction system"/>
    <property type="evidence" value="ECO:0000314"/>
    <property type="project" value="CACAO"/>
</dbReference>
<dbReference type="CDD" id="cd19485">
    <property type="entry name" value="KaiC-N"/>
    <property type="match status" value="1"/>
</dbReference>
<dbReference type="CDD" id="cd19484">
    <property type="entry name" value="KaiC_C"/>
    <property type="match status" value="1"/>
</dbReference>
<dbReference type="FunFam" id="3.40.50.300:FF:001364">
    <property type="entry name" value="Circadian clock protein kinase KaiC"/>
    <property type="match status" value="1"/>
</dbReference>
<dbReference type="FunFam" id="3.40.50.300:FF:002925">
    <property type="entry name" value="Circadian clock protein kinase KaiC"/>
    <property type="match status" value="1"/>
</dbReference>
<dbReference type="Gene3D" id="3.40.50.300">
    <property type="entry name" value="P-loop containing nucleotide triphosphate hydrolases"/>
    <property type="match status" value="2"/>
</dbReference>
<dbReference type="HAMAP" id="MF_01836">
    <property type="entry name" value="KaiC"/>
    <property type="match status" value="1"/>
</dbReference>
<dbReference type="InterPro" id="IPR051347">
    <property type="entry name" value="Circadian_clock_KaiC-rel"/>
</dbReference>
<dbReference type="InterPro" id="IPR013503">
    <property type="entry name" value="Circadian_KaiC_bact"/>
</dbReference>
<dbReference type="InterPro" id="IPR030665">
    <property type="entry name" value="KaiC"/>
</dbReference>
<dbReference type="InterPro" id="IPR014774">
    <property type="entry name" value="KaiC-like_dom"/>
</dbReference>
<dbReference type="InterPro" id="IPR047222">
    <property type="entry name" value="KaiC_C"/>
</dbReference>
<dbReference type="InterPro" id="IPR010624">
    <property type="entry name" value="KaiC_dom"/>
</dbReference>
<dbReference type="InterPro" id="IPR047221">
    <property type="entry name" value="KaiC_N"/>
</dbReference>
<dbReference type="InterPro" id="IPR027417">
    <property type="entry name" value="P-loop_NTPase"/>
</dbReference>
<dbReference type="NCBIfam" id="TIGR02655">
    <property type="entry name" value="circ_KaiC"/>
    <property type="match status" value="1"/>
</dbReference>
<dbReference type="NCBIfam" id="NF006799">
    <property type="entry name" value="PRK09302.1"/>
    <property type="match status" value="1"/>
</dbReference>
<dbReference type="PANTHER" id="PTHR42926">
    <property type="match status" value="1"/>
</dbReference>
<dbReference type="PANTHER" id="PTHR42926:SF1">
    <property type="entry name" value="CIRCADIAN CLOCK OSCILLATOR PROTEIN KAIC 1"/>
    <property type="match status" value="1"/>
</dbReference>
<dbReference type="Pfam" id="PF06745">
    <property type="entry name" value="ATPase"/>
    <property type="match status" value="2"/>
</dbReference>
<dbReference type="PIRSF" id="PIRSF039117">
    <property type="entry name" value="KaiC"/>
    <property type="match status" value="1"/>
</dbReference>
<dbReference type="SUPFAM" id="SSF52540">
    <property type="entry name" value="P-loop containing nucleoside triphosphate hydrolases"/>
    <property type="match status" value="2"/>
</dbReference>
<dbReference type="PROSITE" id="PS51146">
    <property type="entry name" value="KAIC"/>
    <property type="match status" value="2"/>
</dbReference>
<organism>
    <name type="scientific">Synechococcus elongatus (strain ATCC 33912 / PCC 7942 / FACHB-805)</name>
    <name type="common">Anacystis nidulans R2</name>
    <dbReference type="NCBI Taxonomy" id="1140"/>
    <lineage>
        <taxon>Bacteria</taxon>
        <taxon>Bacillati</taxon>
        <taxon>Cyanobacteriota</taxon>
        <taxon>Cyanophyceae</taxon>
        <taxon>Synechococcales</taxon>
        <taxon>Synechococcaceae</taxon>
        <taxon>Synechococcus</taxon>
    </lineage>
</organism>
<protein>
    <recommendedName>
        <fullName evidence="2 40">Circadian clock oscillator protein KaiC</fullName>
        <ecNumber evidence="2 4 8">2.7.11.1</ecNumber>
        <ecNumber evidence="2 22">3.6.4.-</ecNumber>
    </recommendedName>
</protein>
<comment type="function">
    <text evidence="10 15 17 21 23 31 37 39">The KaiABC oscillator complex constitutes the main circadian regulator in cyanobacteria (PubMed:15831759, PubMed:17717528, PubMed:26113637, PubMed:28302852, PubMed:9727980). Complex composition changes during the circadian cycle to control KaiC phosphorylation; KaiA stimulates KaiC autophosphorylation, while KaiB sequesters KaiA, leading to KaiC autodephosphorylation (PubMed:26113637, PubMed:28302852). The Kai complex controls chromosome condensation, leading to a transcription accessible chromosome during the first half of the circadian cycle and a compact, less transcription-accessible chromosome during the latter half (PubMed:16707582). Clock output pathways impact the RpaA transcriptional regulator (PubMed:20133618, PubMed:26113637, PubMed:28302852). Circadian oscillations can be generated in vitro by incubating KaiA, KaiB and KaiC with 1 mM ATP. The cycle is self-sustainable for at least 3 cycles and resistant to temperature changes. Mutations in KaiC alone prolong or reduce the circadian rhythm (PubMed:15831759). A very robust clock is reconstituted with KaiA, KaiB, KaiC, SasA, CikA and RpaA; output is measured by transcription from an appropriate reporter (PubMed:34618577).</text>
</comment>
<comment type="function">
    <text evidence="23 31 34">The level of KaiC phosphorylation and KaiC ATPase activity represent the key features of the biochemical oscillator. KaiA homodimer binding to the KaiC CII domain stimulates KaiC's ATPase activity and forms KaiA(2-4):KaiC(6) complexes, which stimulate KaiC autophosphorylation first on Thr-432 then Ser-431. Phospho-Ser-431-KaiC accumulation triggers binding of KaiB to CI to form the KaiB(6):KaiC(6) complex, leading to changes in the output regulators CikA and SasA. KaiB(6):KaiC(6) formation exposes a site for KaiA binding that sequesters KaiA from the CII domain, making the KaiC(6):KaiB(6):KaiA(12) complex that results in KaiC autodephosphorylation. Complete dephosphorylation of KaiC leads to dissociation of KaiA(2):KaiB(1), completing 1 cycle of the Kai oscillator.</text>
</comment>
<comment type="function">
    <text evidence="22 31 35 36 37 38">Has a weak, temperature-independent ATPase activity (about 15 molecules of ATP per day); the addition of KaiA and KaiB increases activity slightly and makes the activity oscillate with a circadian period in vitro for over 60 hours. ATPase activity defines the circadian period. The phosphorylation state of KaiC modulates its ATPase activity and effects KaiB binding.</text>
</comment>
<comment type="function">
    <text evidence="17 18 25 27 32 37">There are several clock output pathways; SasA/RpaA, CikA/RpaA and LabA (PubMed:20133618). KaiC enhances the autophosphorylation activity of SasA, which then transfers its phosphate group to RpaA to activate it. Phosphotransfer is maximal when KaiC phosphorylation is active during the circadian cycle (PubMed:16707582, PubMed:16882723, PubMed:23541768, PubMed:26113641, PubMed:34618577). KaiB and KaiC together enhance the phosphatase activity of CikA on phospho-RpaA (PubMed:23541768, PubMed:34618577).</text>
</comment>
<comment type="function">
    <text evidence="30">KaiC is important for metabolic partitioning during the dark to light shift, modulating the balance between the Calvin cycle and oxidative pentose phosphate pathway under natural growth conditions.</text>
</comment>
<comment type="catalytic activity">
    <reaction evidence="2 13 14">
        <text>L-seryl-[protein] + ATP = O-phospho-L-seryl-[protein] + ADP + H(+)</text>
        <dbReference type="Rhea" id="RHEA:17989"/>
        <dbReference type="Rhea" id="RHEA-COMP:9863"/>
        <dbReference type="Rhea" id="RHEA-COMP:11604"/>
        <dbReference type="ChEBI" id="CHEBI:15378"/>
        <dbReference type="ChEBI" id="CHEBI:29999"/>
        <dbReference type="ChEBI" id="CHEBI:30616"/>
        <dbReference type="ChEBI" id="CHEBI:83421"/>
        <dbReference type="ChEBI" id="CHEBI:456216"/>
        <dbReference type="EC" id="2.7.11.1"/>
    </reaction>
    <physiologicalReaction direction="left-to-right" evidence="4 8 14">
        <dbReference type="Rhea" id="RHEA:17990"/>
    </physiologicalReaction>
    <physiologicalReaction direction="right-to-left" evidence="8 26">
        <dbReference type="Rhea" id="RHEA:17991"/>
    </physiologicalReaction>
</comment>
<comment type="catalytic activity">
    <reaction evidence="2 13 14">
        <text>L-threonyl-[protein] + ATP = O-phospho-L-threonyl-[protein] + ADP + H(+)</text>
        <dbReference type="Rhea" id="RHEA:46608"/>
        <dbReference type="Rhea" id="RHEA-COMP:11060"/>
        <dbReference type="Rhea" id="RHEA-COMP:11605"/>
        <dbReference type="ChEBI" id="CHEBI:15378"/>
        <dbReference type="ChEBI" id="CHEBI:30013"/>
        <dbReference type="ChEBI" id="CHEBI:30616"/>
        <dbReference type="ChEBI" id="CHEBI:61977"/>
        <dbReference type="ChEBI" id="CHEBI:456216"/>
        <dbReference type="EC" id="2.7.11.1"/>
    </reaction>
    <physiologicalReaction direction="left-to-right" evidence="4 8 14">
        <dbReference type="Rhea" id="RHEA:46609"/>
    </physiologicalReaction>
    <physiologicalReaction direction="right-to-left" evidence="8 26">
        <dbReference type="Rhea" id="RHEA:46610"/>
    </physiologicalReaction>
</comment>
<comment type="catalytic activity">
    <reaction evidence="2 22 31 37 38">
        <text>ATP + H2O = ADP + phosphate + H(+)</text>
        <dbReference type="Rhea" id="RHEA:13065"/>
        <dbReference type="ChEBI" id="CHEBI:15377"/>
        <dbReference type="ChEBI" id="CHEBI:15378"/>
        <dbReference type="ChEBI" id="CHEBI:30616"/>
        <dbReference type="ChEBI" id="CHEBI:43474"/>
        <dbReference type="ChEBI" id="CHEBI:456216"/>
    </reaction>
    <physiologicalReaction direction="left-to-right" evidence="36">
        <dbReference type="Rhea" id="RHEA:13066"/>
    </physiologicalReaction>
    <physiologicalReaction direction="right-to-left" evidence="36">
        <dbReference type="Rhea" id="RHEA:13067"/>
    </physiologicalReaction>
</comment>
<comment type="cofactor">
    <cofactor evidence="2 12 26 38">
        <name>Mg(2+)</name>
        <dbReference type="ChEBI" id="CHEBI:18420"/>
    </cofactor>
    <text evidence="2 26 38">Binds 2 Mg(2+) ions per subunit, one in each domain. Mg(2+) is required for hexamerization and phosphatase activity.</text>
</comment>
<comment type="activity regulation">
    <text evidence="7 8 9 14 24">Interaction with KaiA stimulates autophosphorylation, KaiC interaction with KaiB sequesters KaiA, preventing it stimulating the KaiC kinase, leading to autodephosphorylation. A KaiA dimer is sufficient to enhance KaiC phosphorylation (PubMed:12391300, PubMed:12727878, PubMed:12727879, PubMed:15347812). Interaction of KaiA with the A-loop stimulates autokinase activity (PubMed:18728181).</text>
</comment>
<comment type="biophysicochemical properties">
    <temperatureDependence>
        <text evidence="22">ATPase activity is stable from 25 to 35 degrees Celsius.</text>
    </temperatureDependence>
</comment>
<comment type="subunit">
    <text evidence="3 5 6 8 9 12 13 19 21 26 28 29 32 33 34 35 37 38">Homohexamer resembling 2 stacked donuts with a central pore nearly blocked on one side; hexamerization is dependent on ATP-binding. Binds 12 ATP; 6 between each subunit in both layers (PubMed:15304218, PubMed:15347809, PubMed:22304631, PubMed:24474762, PubMed:35427168). KaiB only binds to phospho-Ser-431 KaiC (not doubly phosphorylated KaiC) (PubMed:17717528, PubMed:29892030). Complex formation between KaiB and KaiC is regulated by the phosphorylation state of KaiC and by an ATP hydrolysis-driven conformation change in the CI ring of KaiC; complex formation is slow. Slow complex formation is crucial for the timing of the circadian period (PubMed:29892030). KaiB switches to a thioredoxin-like form called KaiB(fs) when bound to KaiC (PubMed:26113641). The KaiABC complex composition changes during the circadian cycle to control KaiC phosphorylation. Complexes KaiC(6), KaiA(2-4):KaiC(6), KaiB(6):KaiC(6) and KaiC(6):KaiB(6):KaiA(12) are among the most important forms, many form cooperatively (PubMed:28302852, PubMed:34618577). Interacts directly with KaiB and SasA (PubMed:10786837). The CI domain binds to KaiB and SasA; as they have a similar fold they compete for the same site on CI (PubMed:29892030, PubMed:34618577). CikA interacts with this protein in the clock complex (PubMed:17088557). Binds to the C-terminus of KaiA via a coiled-coil structure (PubMed:26200123). Forms KaiC(6):KaiB(1) and KaiC(6):KaiB(6) complexes (PubMed:23796516, PubMed:24474762).</text>
</comment>
<comment type="interaction">
    <interactant intactId="EBI-592287">
        <id>Q79PF4</id>
    </interactant>
    <interactant intactId="EBI-592281">
        <id>Q79PF6</id>
        <label>kaiA</label>
    </interactant>
    <organismsDiffer>false</organismsDiffer>
    <experiments>22</experiments>
</comment>
<comment type="interaction">
    <interactant intactId="EBI-592287">
        <id>Q79PF4</id>
    </interactant>
    <interactant intactId="EBI-619150">
        <id>Q79PF5</id>
        <label>kaiB</label>
    </interactant>
    <organismsDiffer>false</organismsDiffer>
    <experiments>12</experiments>
</comment>
<comment type="interaction">
    <interactant intactId="EBI-592287">
        <id>Q79PF4</id>
    </interactant>
    <interactant intactId="EBI-592287">
        <id>Q79PF4</id>
        <label>kaiC</label>
    </interactant>
    <organismsDiffer>false</organismsDiffer>
    <experiments>12</experiments>
</comment>
<comment type="interaction">
    <interactant intactId="EBI-592287">
        <id>Q79PF4</id>
    </interactant>
    <interactant intactId="EBI-626872">
        <id>Q06904</id>
        <label>sasA</label>
    </interactant>
    <organismsDiffer>false</organismsDiffer>
    <experiments>6</experiments>
</comment>
<comment type="developmental stage">
    <text evidence="11">Accumulates in a circadian fashion, peaking at circadian time (CT) 15-18.</text>
</comment>
<comment type="induction">
    <text evidence="10 13 20 39">Transcribed in a circadian rhythm with maximal expression at 12 hours and minimal expression 12 hours later; expressed as a kaiB-kaiC opperon, this gene does not have its own promoter (PubMed:9727980). Autorepresses expression (PubMed:14709675, PubMed:15347809, PubMed:9727980). Negatively regulated by labA (PubMed:17210789). Non-phosphorylatable kaiC mutants still down-regulate the kaiBC operon (PubMed:15347809).</text>
</comment>
<comment type="domain">
    <text evidence="12 13 16 22 24 26 31 33 34 35 38 46">In the homohexamer the 2 domains (called CI and CII, joined by a linker) self-associate to each form a 'donut' layer; the compactness and local conformation of the domains varies over the cell cycle and impacts function (PubMed:15304218, PubMed:15347809, PubMed:16628225, PubMed:29892030, PubMed:35427168). CII has the autokinase and autophosphatase activities, both CI and CII have (weak) ATPase activity; CI has the clock pacemaker role (PubMed:17901204, PubMed:22304631, PubMed:26113637). The CI ring undergoes structural changes driven by ATP hydrolysis that together with the KaiC phosphorylation state regulate KaiB binding (PubMed:29892030). The C-terminus of CII (residues 488-519) is disordered, extending from the top of the structure near the central pore (PubMed:15304218, PubMed:15347809, PubMed:16628225). The A-loop (residues 488-497) switches between a buried and exposed state, determining the levels of autokinase and autophosphatase activities. When the A-loop is exposed it interacts with KaiA, activating the autokinase activity (PubMed:18728181). Binding to KaiA occurs via the extreme C-terminus which assumes a coiled-coil structure upon binding (PubMed:26200123). KaiB interacts with the CI domain which has bound ADP (PubMed:28302852). Communication between CI and CII occurs via the Glu-214-Arg-217-Gln-394 triad (PubMed:35427168).</text>
</comment>
<comment type="domain">
    <text evidence="2">In the homohexamer the 2 domains (called CI and CII) self-associate to each form a 'donut' layer; the compactness and local conformation of the domains varies over the cell cycle and impacts function. CII has the autokinase and autophosphatase activities, both CI and CII have (weak) ATPase activity; CI has the clock pacemaker role.</text>
</comment>
<comment type="PTM">
    <text evidence="7 8 9 14 21 23">Has a 4 step phosphorylation cycle; the autokinase acts first on Thr-432, then Ser-431. When Ser-431 is modified KaiC switches to an autophosphatase mode, acting first on phospho-Thr-432 then phospho-Ser-431 (PubMed:17717528, PubMed:17916691). Phosphorylated and dephosphorylated on serine/threonine residues by autocatalysis. Unphosphorylated, mono- and di-phosphorylated forms exist. The phosphorylated form correlates with clock speed (PubMed:12391300, PubMed:15347812). The presence of KaiA increases phosphorylation and stabilizes these forms (PubMed:12391300, PubMed:15347812).</text>
</comment>
<comment type="PTM">
    <text evidence="2">Phosphorylated on serine and threonine residues by autocatalysis. Has a 4 step phosphorylation cycle; the autokinase acts first on Thr-432, then Ser-431. When Ser-431 is modified KaiC switches to an autophosphatase mode, acting first on phospho-Thr-432 then phospho-Ser-431.</text>
</comment>
<comment type="disruption phenotype">
    <text evidence="17 30 39">Not essential for growth on low light, loss of circadian cycle and rhythmicity (PubMed:9727980). Loss of rhythmic chromosome compaction (PubMed:16707582). No visible phenotype during growth in a light/dark regime for 5-7 days (at 150 umol photons/m(2)/s). Accumulates much larger amounts of primary metabolites (especially those in and connected to the oxidative pentose phosphate pathway) in 4 hours after dark-light transition. Glycogen accumulates 4-5 hours earlier than normal, overall levels are higher, no change in glycogen degradation kinetics (PubMed:25825710).</text>
</comment>
<comment type="miscellaneous">
    <text evidence="40">'Kai' means 'cycle' in Japanese.</text>
</comment>
<comment type="similarity">
    <text evidence="2 41">Belongs to the KaiC family.</text>
</comment>
<accession>Q79PF4</accession>
<accession>Q31NX3</accession>
<accession>Q9Z3H2</accession>
<evidence type="ECO:0000250" key="1">
    <source>
        <dbReference type="UniProtKB" id="Q79V60"/>
    </source>
</evidence>
<evidence type="ECO:0000255" key="2">
    <source>
        <dbReference type="HAMAP-Rule" id="MF_01836"/>
    </source>
</evidence>
<evidence type="ECO:0000269" key="3">
    <source>
    </source>
</evidence>
<evidence type="ECO:0000269" key="4">
    <source>
    </source>
</evidence>
<evidence type="ECO:0000269" key="5">
    <source>
    </source>
</evidence>
<evidence type="ECO:0000269" key="6">
    <source>
    </source>
</evidence>
<evidence type="ECO:0000269" key="7">
    <source>
    </source>
</evidence>
<evidence type="ECO:0000269" key="8">
    <source>
    </source>
</evidence>
<evidence type="ECO:0000269" key="9">
    <source>
    </source>
</evidence>
<evidence type="ECO:0000269" key="10">
    <source>
    </source>
</evidence>
<evidence type="ECO:0000269" key="11">
    <source>
    </source>
</evidence>
<evidence type="ECO:0000269" key="12">
    <source>
    </source>
</evidence>
<evidence type="ECO:0000269" key="13">
    <source>
    </source>
</evidence>
<evidence type="ECO:0000269" key="14">
    <source>
    </source>
</evidence>
<evidence type="ECO:0000269" key="15">
    <source>
    </source>
</evidence>
<evidence type="ECO:0000269" key="16">
    <source>
    </source>
</evidence>
<evidence type="ECO:0000269" key="17">
    <source>
    </source>
</evidence>
<evidence type="ECO:0000269" key="18">
    <source>
    </source>
</evidence>
<evidence type="ECO:0000269" key="19">
    <source>
    </source>
</evidence>
<evidence type="ECO:0000269" key="20">
    <source>
    </source>
</evidence>
<evidence type="ECO:0000269" key="21">
    <source>
    </source>
</evidence>
<evidence type="ECO:0000269" key="22">
    <source>
    </source>
</evidence>
<evidence type="ECO:0000269" key="23">
    <source>
    </source>
</evidence>
<evidence type="ECO:0000269" key="24">
    <source>
    </source>
</evidence>
<evidence type="ECO:0000269" key="25">
    <source>
    </source>
</evidence>
<evidence type="ECO:0000269" key="26">
    <source>
    </source>
</evidence>
<evidence type="ECO:0000269" key="27">
    <source>
    </source>
</evidence>
<evidence type="ECO:0000269" key="28">
    <source>
    </source>
</evidence>
<evidence type="ECO:0000269" key="29">
    <source>
    </source>
</evidence>
<evidence type="ECO:0000269" key="30">
    <source>
    </source>
</evidence>
<evidence type="ECO:0000269" key="31">
    <source>
    </source>
</evidence>
<evidence type="ECO:0000269" key="32">
    <source>
    </source>
</evidence>
<evidence type="ECO:0000269" key="33">
    <source>
    </source>
</evidence>
<evidence type="ECO:0000269" key="34">
    <source>
    </source>
</evidence>
<evidence type="ECO:0000269" key="35">
    <source>
    </source>
</evidence>
<evidence type="ECO:0000269" key="36">
    <source>
    </source>
</evidence>
<evidence type="ECO:0000269" key="37">
    <source>
    </source>
</evidence>
<evidence type="ECO:0000269" key="38">
    <source>
    </source>
</evidence>
<evidence type="ECO:0000269" key="39">
    <source>
    </source>
</evidence>
<evidence type="ECO:0000303" key="40">
    <source>
    </source>
</evidence>
<evidence type="ECO:0000305" key="41"/>
<evidence type="ECO:0000305" key="42">
    <source>
    </source>
</evidence>
<evidence type="ECO:0000312" key="43">
    <source>
        <dbReference type="EMBL" id="AAM82686.1"/>
    </source>
</evidence>
<evidence type="ECO:0000312" key="44">
    <source>
        <dbReference type="EMBL" id="ABB57246.1"/>
    </source>
</evidence>
<evidence type="ECO:0000312" key="45">
    <source>
        <dbReference type="EMBL" id="BAA37103.1"/>
    </source>
</evidence>
<evidence type="ECO:0000312" key="46">
    <source>
        <dbReference type="PDB" id="4TLA"/>
    </source>
</evidence>
<evidence type="ECO:0007744" key="47">
    <source>
        <dbReference type="PDB" id="1TF7"/>
    </source>
</evidence>
<evidence type="ECO:0007744" key="48">
    <source>
        <dbReference type="PDB" id="1U9I"/>
    </source>
</evidence>
<evidence type="ECO:0007744" key="49">
    <source>
        <dbReference type="PDB" id="2GBL"/>
    </source>
</evidence>
<evidence type="ECO:0007744" key="50">
    <source>
        <dbReference type="PDB" id="3DVL"/>
    </source>
</evidence>
<evidence type="ECO:0007744" key="51">
    <source>
        <dbReference type="PDB" id="4DUG"/>
    </source>
</evidence>
<evidence type="ECO:0007744" key="52">
    <source>
        <dbReference type="PDB" id="4TL6"/>
    </source>
</evidence>
<evidence type="ECO:0007744" key="53">
    <source>
        <dbReference type="PDB" id="4TL7"/>
    </source>
</evidence>
<evidence type="ECO:0007744" key="54">
    <source>
        <dbReference type="PDB" id="4TL8"/>
    </source>
</evidence>
<evidence type="ECO:0007744" key="55">
    <source>
        <dbReference type="PDB" id="4TL9"/>
    </source>
</evidence>
<evidence type="ECO:0007744" key="56">
    <source>
        <dbReference type="PDB" id="4TLA"/>
    </source>
</evidence>
<evidence type="ECO:0007744" key="57">
    <source>
        <dbReference type="PDB" id="4TLB"/>
    </source>
</evidence>
<evidence type="ECO:0007744" key="58">
    <source>
        <dbReference type="PDB" id="4TLC"/>
    </source>
</evidence>
<evidence type="ECO:0007744" key="59">
    <source>
        <dbReference type="PDB" id="4TLD"/>
    </source>
</evidence>
<evidence type="ECO:0007744" key="60">
    <source>
        <dbReference type="PDB" id="4TLE"/>
    </source>
</evidence>
<evidence type="ECO:0007744" key="61">
    <source>
        <dbReference type="PDB" id="5C5E"/>
    </source>
</evidence>
<evidence type="ECO:0007744" key="62">
    <source>
        <dbReference type="PDB" id="5N8Y"/>
    </source>
</evidence>
<evidence type="ECO:0007744" key="63">
    <source>
        <dbReference type="PDB" id="5YZ8"/>
    </source>
</evidence>
<evidence type="ECO:0007744" key="64">
    <source>
        <dbReference type="PDB" id="7DXQ"/>
    </source>
</evidence>
<evidence type="ECO:0007744" key="65">
    <source>
        <dbReference type="PDB" id="7DY2"/>
    </source>
</evidence>
<evidence type="ECO:0007744" key="66">
    <source>
        <dbReference type="PDB" id="7DYI"/>
    </source>
</evidence>
<evidence type="ECO:0007744" key="67">
    <source>
        <dbReference type="PDB" id="7DYJ"/>
    </source>
</evidence>
<evidence type="ECO:0007744" key="68">
    <source>
        <dbReference type="PDB" id="7DYK"/>
    </source>
</evidence>
<evidence type="ECO:0007744" key="69">
    <source>
        <dbReference type="PDB" id="7S65"/>
    </source>
</evidence>
<evidence type="ECO:0007744" key="70">
    <source>
        <dbReference type="PDB" id="7S66"/>
    </source>
</evidence>
<evidence type="ECO:0007744" key="71">
    <source>
        <dbReference type="PDB" id="7S67"/>
    </source>
</evidence>
<evidence type="ECO:0007744" key="72">
    <source>
        <dbReference type="PDB" id="7V3X"/>
    </source>
</evidence>
<evidence type="ECO:0007829" key="73">
    <source>
        <dbReference type="PDB" id="1TF7"/>
    </source>
</evidence>
<evidence type="ECO:0007829" key="74">
    <source>
        <dbReference type="PDB" id="1U9I"/>
    </source>
</evidence>
<evidence type="ECO:0007829" key="75">
    <source>
        <dbReference type="PDB" id="2GBL"/>
    </source>
</evidence>
<evidence type="ECO:0007829" key="76">
    <source>
        <dbReference type="PDB" id="3K0A"/>
    </source>
</evidence>
<evidence type="ECO:0007829" key="77">
    <source>
        <dbReference type="PDB" id="4TL6"/>
    </source>
</evidence>
<evidence type="ECO:0007829" key="78">
    <source>
        <dbReference type="PDB" id="4TL7"/>
    </source>
</evidence>
<evidence type="ECO:0007829" key="79">
    <source>
        <dbReference type="PDB" id="4TLA"/>
    </source>
</evidence>
<evidence type="ECO:0007829" key="80">
    <source>
        <dbReference type="PDB" id="5C5E"/>
    </source>
</evidence>
<evidence type="ECO:0007829" key="81">
    <source>
        <dbReference type="PDB" id="7DYE"/>
    </source>
</evidence>
<evidence type="ECO:0007829" key="82">
    <source>
        <dbReference type="PDB" id="7DYJ"/>
    </source>
</evidence>
<evidence type="ECO:0007829" key="83">
    <source>
        <dbReference type="PDB" id="7S65"/>
    </source>
</evidence>
<evidence type="ECO:0007829" key="84">
    <source>
        <dbReference type="PDB" id="7WDC"/>
    </source>
</evidence>
<keyword id="KW-0002">3D-structure</keyword>
<keyword id="KW-0067">ATP-binding</keyword>
<keyword id="KW-0090">Biological rhythms</keyword>
<keyword id="KW-0903">Direct protein sequencing</keyword>
<keyword id="KW-0378">Hydrolase</keyword>
<keyword id="KW-0418">Kinase</keyword>
<keyword id="KW-0460">Magnesium</keyword>
<keyword id="KW-0479">Metal-binding</keyword>
<keyword id="KW-0547">Nucleotide-binding</keyword>
<keyword id="KW-0597">Phosphoprotein</keyword>
<keyword id="KW-1185">Reference proteome</keyword>
<keyword id="KW-0677">Repeat</keyword>
<keyword id="KW-0723">Serine/threonine-protein kinase</keyword>
<keyword id="KW-0804">Transcription</keyword>
<keyword id="KW-0805">Transcription regulation</keyword>
<keyword id="KW-0808">Transferase</keyword>
<feature type="chain" id="PRO_0000217782" description="Circadian clock oscillator protein KaiC">
    <location>
        <begin position="1"/>
        <end position="519"/>
    </location>
</feature>
<feature type="domain" description="KaiC 1" evidence="2 12 13 14">
    <location>
        <begin position="1"/>
        <end position="247"/>
    </location>
</feature>
<feature type="domain" description="KaiC 2" evidence="2 12 13 14">
    <location>
        <begin position="261"/>
        <end position="519"/>
    </location>
</feature>
<feature type="region of interest" description="B-loop, required to bind KaiB and SasA" evidence="1">
    <location>
        <begin position="115"/>
        <end position="122"/>
    </location>
</feature>
<feature type="region of interest" description="Linker" evidence="12">
    <location>
        <begin position="248"/>
        <end position="260"/>
    </location>
</feature>
<feature type="region of interest" description="A-loop, interacts with KaiA" evidence="24">
    <location>
        <begin position="488"/>
        <end position="497"/>
    </location>
</feature>
<feature type="active site" description="Proton acceptor in CI (KaiC 1)" evidence="42">
    <location>
        <position position="77"/>
    </location>
</feature>
<feature type="active site" description="Proton acceptor in CII (KaiC 2)" evidence="42">
    <location>
        <position position="318"/>
    </location>
</feature>
<feature type="binding site" evidence="2 12 16 26 47 49 51">
    <location>
        <position position="49"/>
    </location>
    <ligand>
        <name>ATP</name>
        <dbReference type="ChEBI" id="CHEBI:30616"/>
        <label>1</label>
        <note>ligand shared between homodimeric partners</note>
    </ligand>
</feature>
<feature type="binding site" evidence="2 12 16 26 47 49 51">
    <location>
        <position position="50"/>
    </location>
    <ligand>
        <name>ATP</name>
        <dbReference type="ChEBI" id="CHEBI:30616"/>
        <label>1</label>
        <note>ligand shared between homodimeric partners</note>
    </ligand>
</feature>
<feature type="binding site" evidence="2 12 16 26 47 49 51">
    <location>
        <position position="51"/>
    </location>
    <ligand>
        <name>ATP</name>
        <dbReference type="ChEBI" id="CHEBI:30616"/>
        <label>1</label>
        <note>ligand shared between homodimeric partners</note>
    </ligand>
</feature>
<feature type="binding site" evidence="2 12 16 26 47 49 51">
    <location>
        <position position="52"/>
    </location>
    <ligand>
        <name>ATP</name>
        <dbReference type="ChEBI" id="CHEBI:30616"/>
        <label>1</label>
        <note>ligand shared between homodimeric partners</note>
    </ligand>
</feature>
<feature type="binding site" evidence="2 12 16 26 47 49 51">
    <location>
        <position position="53"/>
    </location>
    <ligand>
        <name>ATP</name>
        <dbReference type="ChEBI" id="CHEBI:30616"/>
        <label>1</label>
        <note>ligand shared between homodimeric partners</note>
    </ligand>
</feature>
<feature type="binding site" evidence="2 51 52 64">
    <location>
        <position position="53"/>
    </location>
    <ligand>
        <name>Mg(2+)</name>
        <dbReference type="ChEBI" id="CHEBI:18420"/>
        <label>1</label>
    </ligand>
</feature>
<feature type="binding site" evidence="2 12 16 26 47 49 51">
    <location>
        <position position="54"/>
    </location>
    <ligand>
        <name>ATP</name>
        <dbReference type="ChEBI" id="CHEBI:30616"/>
        <label>1</label>
        <note>ligand shared between homodimeric partners</note>
    </ligand>
</feature>
<feature type="binding site" evidence="2 12 16 26 47 49 51">
    <location>
        <position position="89"/>
    </location>
    <ligand>
        <name>ATP</name>
        <dbReference type="ChEBI" id="CHEBI:30616"/>
        <label>1</label>
        <note>ligand shared between homodimeric partners</note>
    </ligand>
</feature>
<feature type="binding site" evidence="2 12 16 26 47 49 51">
    <location>
        <position position="224"/>
    </location>
    <ligand>
        <name>ATP</name>
        <dbReference type="ChEBI" id="CHEBI:30616"/>
        <label>1</label>
        <note>ligand shared between homodimeric partners</note>
    </ligand>
</feature>
<feature type="binding site" evidence="2 12 16 47 49">
    <location>
        <position position="225"/>
    </location>
    <ligand>
        <name>ATP</name>
        <dbReference type="ChEBI" id="CHEBI:30616"/>
        <label>1</label>
        <note>ligand shared between homodimeric partners</note>
    </ligand>
</feature>
<feature type="binding site" evidence="2 12 16 26 47 49 51">
    <location>
        <position position="226"/>
    </location>
    <ligand>
        <name>ATP</name>
        <dbReference type="ChEBI" id="CHEBI:30616"/>
        <label>1</label>
        <note>ligand shared between homodimeric partners</note>
    </ligand>
</feature>
<feature type="binding site" evidence="2 12 16 26 47 49 51">
    <location>
        <position position="228"/>
    </location>
    <ligand>
        <name>ATP</name>
        <dbReference type="ChEBI" id="CHEBI:30616"/>
        <label>1</label>
        <note>ligand shared between homodimeric partners</note>
    </ligand>
</feature>
<feature type="binding site" evidence="2 12 16 26 47 49 51">
    <location>
        <position position="230"/>
    </location>
    <ligand>
        <name>ATP</name>
        <dbReference type="ChEBI" id="CHEBI:30616"/>
        <label>1</label>
        <note>ligand shared between homodimeric partners</note>
    </ligand>
</feature>
<feature type="binding site" evidence="2 12 16 26 47 49 51">
    <location>
        <position position="240"/>
    </location>
    <ligand>
        <name>ATP</name>
        <dbReference type="ChEBI" id="CHEBI:30616"/>
        <label>1</label>
        <note>ligand shared between homodimeric partners</note>
    </ligand>
</feature>
<feature type="binding site" evidence="2 12 16 26 47 49 51">
    <location>
        <position position="241"/>
    </location>
    <ligand>
        <name>ATP</name>
        <dbReference type="ChEBI" id="CHEBI:30616"/>
        <label>1</label>
        <note>ligand shared between homodimeric partners</note>
    </ligand>
</feature>
<feature type="binding site" evidence="2 12 16 26 47 49 51">
    <location>
        <position position="290"/>
    </location>
    <ligand>
        <name>ATP</name>
        <dbReference type="ChEBI" id="CHEBI:30616"/>
        <label>2</label>
        <note>ligand shared between homodimeric partners</note>
    </ligand>
</feature>
<feature type="binding site" evidence="2 12 16 26 47 49 51">
    <location>
        <position position="291"/>
    </location>
    <ligand>
        <name>ATP</name>
        <dbReference type="ChEBI" id="CHEBI:30616"/>
        <label>2</label>
        <note>ligand shared between homodimeric partners</note>
    </ligand>
</feature>
<feature type="binding site" evidence="2 12 16 26 47 49 51">
    <location>
        <position position="292"/>
    </location>
    <ligand>
        <name>ATP</name>
        <dbReference type="ChEBI" id="CHEBI:30616"/>
        <label>2</label>
        <note>ligand shared between homodimeric partners</note>
    </ligand>
</feature>
<feature type="binding site" evidence="2 12 16 26 47 49 51">
    <location>
        <position position="293"/>
    </location>
    <ligand>
        <name>ATP</name>
        <dbReference type="ChEBI" id="CHEBI:30616"/>
        <label>2</label>
        <note>ligand shared between homodimeric partners</note>
    </ligand>
</feature>
<feature type="binding site" evidence="2 12 16 26 47 49 51">
    <location>
        <position position="294"/>
    </location>
    <ligand>
        <name>ATP</name>
        <dbReference type="ChEBI" id="CHEBI:30616"/>
        <label>2</label>
        <note>ligand shared between homodimeric partners</note>
    </ligand>
</feature>
<feature type="binding site" evidence="2 12 16 26 47 49 51">
    <location>
        <position position="295"/>
    </location>
    <ligand>
        <name>ATP</name>
        <dbReference type="ChEBI" id="CHEBI:30616"/>
        <label>2</label>
        <note>ligand shared between homodimeric partners</note>
    </ligand>
</feature>
<feature type="binding site" evidence="2 12 16 48 49 51 64">
    <location>
        <position position="295"/>
    </location>
    <ligand>
        <name>Mg(2+)</name>
        <dbReference type="ChEBI" id="CHEBI:18420"/>
        <label>2</label>
    </ligand>
</feature>
<feature type="binding site" evidence="2 12 16 26 47 49 51">
    <location>
        <position position="296"/>
    </location>
    <ligand>
        <name>ATP</name>
        <dbReference type="ChEBI" id="CHEBI:30616"/>
        <label>2</label>
        <note>ligand shared between homodimeric partners</note>
    </ligand>
</feature>
<feature type="binding site" evidence="2 12 16">
    <location>
        <position position="318"/>
    </location>
    <ligand>
        <name>Mg(2+)</name>
        <dbReference type="ChEBI" id="CHEBI:18420"/>
        <label>2</label>
    </ligand>
</feature>
<feature type="binding site" evidence="2 12 16 26 47 49 51">
    <location>
        <position position="331"/>
    </location>
    <ligand>
        <name>ATP</name>
        <dbReference type="ChEBI" id="CHEBI:30616"/>
        <label>2</label>
        <note>ligand shared between homodimeric partners</note>
    </ligand>
</feature>
<feature type="binding site" evidence="2 12 16 26 47 49 51">
    <location>
        <position position="451"/>
    </location>
    <ligand>
        <name>ATP</name>
        <dbReference type="ChEBI" id="CHEBI:30616"/>
        <label>2</label>
        <note>ligand shared between homodimeric partners</note>
    </ligand>
</feature>
<feature type="binding site" evidence="2 12 16 26 47 49 51">
    <location>
        <position position="457"/>
    </location>
    <ligand>
        <name>ATP</name>
        <dbReference type="ChEBI" id="CHEBI:30616"/>
        <label>2</label>
        <note>ligand shared between homodimeric partners</note>
    </ligand>
</feature>
<feature type="binding site" evidence="2 12 16 47 49">
    <location>
        <position position="458"/>
    </location>
    <ligand>
        <name>ATP</name>
        <dbReference type="ChEBI" id="CHEBI:30616"/>
        <label>2</label>
        <note>ligand shared between homodimeric partners</note>
    </ligand>
</feature>
<feature type="binding site" evidence="2 12 16 26 47 49 51">
    <location>
        <position position="459"/>
    </location>
    <ligand>
        <name>ATP</name>
        <dbReference type="ChEBI" id="CHEBI:30616"/>
        <label>2</label>
        <note>ligand shared between homodimeric partners</note>
    </ligand>
</feature>
<feature type="binding site" evidence="2 12 16 26 47 49 51">
    <location>
        <position position="461"/>
    </location>
    <ligand>
        <name>ATP</name>
        <dbReference type="ChEBI" id="CHEBI:30616"/>
        <label>2</label>
        <note>ligand shared between homodimeric partners</note>
    </ligand>
</feature>
<feature type="binding site" evidence="2 12 16 26 47 49 51">
    <location>
        <position position="463"/>
    </location>
    <ligand>
        <name>ATP</name>
        <dbReference type="ChEBI" id="CHEBI:30616"/>
        <label>2</label>
        <note>ligand shared between homodimeric partners</note>
    </ligand>
</feature>
<feature type="binding site" evidence="2 12 16 26 47 49 51">
    <location>
        <position position="465"/>
    </location>
    <ligand>
        <name>ATP</name>
        <dbReference type="ChEBI" id="CHEBI:30616"/>
        <label>2</label>
        <note>ligand shared between homodimeric partners</note>
    </ligand>
</feature>
<feature type="modified residue" description="Phosphoserine; by autocatalysis" evidence="2 13 14 21 23 48 49">
    <location>
        <position position="431"/>
    </location>
</feature>
<feature type="modified residue" description="Phosphothreonine; by autocatalysis" evidence="2 12 13 14 21 23 48 49">
    <location>
        <position position="432"/>
    </location>
</feature>
<feature type="mutagenesis site" description="Extends the period of the circadian rhythm to 28 hours in reconstituted KaiABC complex. Decreased endogenous ATPase." evidence="15 22">
    <original>T</original>
    <variation>S</variation>
    <location>
        <position position="42"/>
    </location>
</feature>
<feature type="mutagenesis site" description="Induces an arrhythmic phenotype, significantly reduced ATP-binding." evidence="4">
    <original>K</original>
    <variation>A</variation>
    <location>
        <position position="52"/>
    </location>
</feature>
<feature type="mutagenesis site" description="Lowers the amplitude and distords the waveform of the circadian rhythm." evidence="4">
    <original>G</original>
    <variation>A</variation>
    <location>
        <position position="71"/>
    </location>
</feature>
<feature type="mutagenesis site" description="In kaiC1; shortens the period of the circadian rhythm to 22 hours." evidence="39">
    <original>A</original>
    <variation>V</variation>
    <location>
        <position position="87"/>
    </location>
</feature>
<feature type="mutagenesis site" description="Increases photoperiod in presence of KaiA and KaiB." evidence="35">
    <original>W</original>
    <variation>F</variation>
    <location>
        <position position="92"/>
    </location>
</feature>
<feature type="mutagenesis site" description="No longer binds KaiB, no formation of KaiCBA, still phosphorylated." evidence="34">
    <original>A</original>
    <variation>E</variation>
    <location>
        <position position="108"/>
    </location>
</feature>
<feature type="mutagenesis site" description="Reduced binding of KaiB, reduced formation of KaiCBA, still phosphorylated." evidence="34">
    <original>A</original>
    <variation>L</variation>
    <location>
        <position position="108"/>
    </location>
</feature>
<feature type="mutagenesis site" description="Extends the period of the circadian rhythm to 27 hours." evidence="4">
    <original>G</original>
    <variation>A</variation>
    <location>
        <position position="114"/>
    </location>
</feature>
<feature type="mutagenesis site" description="Abolishes the circadian rhythm." evidence="4">
    <original>Q</original>
    <variation>A</variation>
    <location>
        <position position="115"/>
    </location>
</feature>
<feature type="mutagenesis site" description="CI hydrolysis rate halves, increases period of the circadian rhythm by nearly 50%." evidence="31">
    <original>S</original>
    <variation>P</variation>
    <location>
        <position position="146"/>
    </location>
</feature>
<feature type="mutagenesis site" description="Loss of stable oscillation in presence of KaiA and KaiB." evidence="35">
    <original>S</original>
    <variation>W</variation>
    <location>
        <position position="146"/>
    </location>
</feature>
<feature type="mutagenesis site" description="Higher CI ATPase activity, clock speeds up." evidence="31">
    <original>Q</original>
    <variation>A</variation>
    <location>
        <position position="153"/>
    </location>
</feature>
<feature type="mutagenesis site" description="In kaiC2; extends the period of the circadian rhythm to 29 hours. Lower CI ATPase activity, clock slows down." evidence="31 39">
    <original>S</original>
    <variation>C</variation>
    <location>
        <position position="157"/>
    </location>
</feature>
<feature type="mutagenesis site" description="Shortens the period of the circadian rhythm to 21 hours in reconstituted KaiABC complex. Increased endogenous ATPase. Higher CI ATPase activity, clock speeds up." evidence="15 22 31">
    <original>S</original>
    <variation>P</variation>
    <location>
        <position position="157"/>
    </location>
</feature>
<feature type="mutagenesis site" description="Arrhythmic." evidence="35">
    <original>S</original>
    <variation>W</variation>
    <location>
        <position position="157"/>
    </location>
</feature>
<feature type="mutagenesis site" description="In kaiC3; shortens the period of the circadian rhythm to 16 hours and decreases the interaction with KaiA." evidence="39">
    <original>R</original>
    <variation>C</variation>
    <location>
        <position position="215"/>
    </location>
</feature>
<feature type="mutagenesis site" description="Increases photoperiod in presence of KaiA and KaiB." evidence="35">
    <original>S</original>
    <variation>W</variation>
    <location>
        <position position="229"/>
    </location>
</feature>
<feature type="mutagenesis site" description="In kaiC4; extends the period of the circadian rhythm to 28 hours." evidence="39">
    <original>P</original>
    <variation>S</variation>
    <location>
        <position position="236"/>
    </location>
</feature>
<feature type="mutagenesis site" description="In kaiC6; induces a low amplitude phenotype and decreases the interaction with KaiA." evidence="39">
    <original>P</original>
    <variation>L</variation>
    <location>
        <position position="248"/>
    </location>
</feature>
<feature type="mutagenesis site" description="In kaiC5; induces an arrhythmic phenotype." evidence="39">
    <original>P</original>
    <variation>S</variation>
    <location>
        <position position="248"/>
    </location>
</feature>
<feature type="mutagenesis site" description="Increased endogenous ATPase." evidence="22">
    <original>A</original>
    <variation>V</variation>
    <location>
        <position position="251"/>
    </location>
</feature>
<feature type="mutagenesis site" description="In kaiC7; extends the period of the circadian rhythm to 40 hours." evidence="39">
    <original>R</original>
    <variation>H</variation>
    <location>
        <position position="253"/>
    </location>
</feature>
<feature type="mutagenesis site" description="In kaiC8; extends the period of the circadian rhythm to 37 hours." evidence="39">
    <original>M</original>
    <variation>I</variation>
    <location>
        <position position="273"/>
    </location>
</feature>
<feature type="mutagenesis site" description="Induces a long period phenotype, no change in ATP-binding." evidence="4">
    <original>K</original>
    <variation>A</variation>
    <location>
        <position position="294"/>
    </location>
</feature>
<feature type="mutagenesis site" description="No kinase activity." evidence="26">
    <original>EE</original>
    <variation>AA</variation>
    <location>
        <begin position="318"/>
        <end position="319"/>
    </location>
</feature>
<feature type="mutagenesis site" description="Abolishes clock rhythmicity, phosphosphorylates T-432 but not S-431." evidence="26">
    <original>E</original>
    <variation>A</variation>
    <location>
        <position position="318"/>
    </location>
</feature>
<feature type="mutagenesis site" description="Low phosphorylation." evidence="26">
    <original>E</original>
    <variation>G</variation>
    <location>
        <position position="319"/>
    </location>
</feature>
<feature type="mutagenesis site" description="Strongly phosphorylated, arrhytmic in vivo." evidence="26">
    <original>E</original>
    <variation>Q</variation>
    <location>
        <position position="319"/>
    </location>
</feature>
<feature type="mutagenesis site" description="In kaiC9; shortens the period of the circadian rhythm to 21 hours." evidence="39">
    <original>R</original>
    <variation>Q</variation>
    <location>
        <position position="321"/>
    </location>
</feature>
<feature type="mutagenesis site" description="Arrhythmic." evidence="35">
    <original>W</original>
    <variation>F</variation>
    <location>
        <position position="331"/>
    </location>
</feature>
<feature type="mutagenesis site" description="Decreased endogenous ATPase." evidence="22">
    <original>R</original>
    <variation>C</variation>
    <location>
        <position position="393"/>
    </location>
</feature>
<feature type="mutagenesis site" description="Constitutive KaiC phosphorylation." evidence="38">
    <original>Q</original>
    <variation>E</variation>
    <location>
        <position position="394"/>
    </location>
</feature>
<feature type="mutagenesis site" description="Very slow phosphorylation in presence of KaiA, none in presence of KaiA-KaiB." evidence="38">
    <original>Q</original>
    <variation>K</variation>
    <location>
        <position position="394"/>
    </location>
</feature>
<feature type="mutagenesis site" description="In kaiC10; extends the period of the circadian rhythm to 27 hours." evidence="39">
    <original>T</original>
    <variation>A</variation>
    <location>
        <position position="409"/>
    </location>
</feature>
<feature type="mutagenesis site" description="In kaiC11; extends the period of the circadian rhythm to 44 hours and increases the interaction with KaiA." evidence="39">
    <original>G</original>
    <variation>R</variation>
    <location>
        <position position="421"/>
    </location>
</feature>
<feature type="mutagenesis site" description="In kaiC15; able to suppress the kaiA2 extended phenotype." evidence="7 39">
    <original>A</original>
    <variation>T</variation>
    <location>
        <position position="422"/>
    </location>
</feature>
<feature type="mutagenesis site" description="No phosphorylation in vivo, does not restore rhythmicity, hexamerizes and down-regulates operon." evidence="13">
    <original>TDSHIST</original>
    <variation>ADSHIAA</variation>
    <location>
        <begin position="426"/>
        <end position="432"/>
    </location>
</feature>
<feature type="mutagenesis site" description="About wild-type phosphorylation in vivo, does not restore rhythmicity, hexamerizes and down-regulates operon." evidence="13">
    <original>TDSHIS</original>
    <variation>ADSHIA</variation>
    <location>
        <begin position="426"/>
        <end position="431"/>
    </location>
</feature>
<feature type="mutagenesis site" description="Decreased phosphorylation in vivo, does not restore rhythmicity, hexamerizes and down-regulates operon." evidence="13">
    <original>T</original>
    <variation>A</variation>
    <location>
        <position position="426"/>
    </location>
</feature>
<feature type="mutagenesis site" description="Arrhytmic." evidence="26">
    <original>D</original>
    <variation>A</variation>
    <location>
        <position position="427"/>
    </location>
</feature>
<feature type="mutagenesis site" description="No phosphorylation in vitro, hexamerizes, presence of KaiA does not enhance phosphorylation, arrhythmic in vivo, prevents formation of the KaiABC-SasA complex, transiently down-regulates operon. 1.8 fold increase in endogenous ATPase. Reduced ATP synthase." evidence="14 22 26">
    <original>ST</original>
    <variation>AA</variation>
    <location>
        <begin position="431"/>
        <end position="432"/>
    </location>
</feature>
<feature type="mutagenesis site" description="75% endogenous ATPase." evidence="22">
    <original>ST</original>
    <variation>DE</variation>
    <location>
        <begin position="431"/>
        <end position="432"/>
    </location>
</feature>
<feature type="mutagenesis site" description="Increased phosphorylation in vivo, does not restore rhythmicity, hexamerizes and down-regulates operon. A single phosphorylated form occurs in vitro, accumulates in presence of KaiA, arrhythmic in vivo. Not dephosphorylated, even by KaiA." evidence="13 14 21">
    <original>S</original>
    <variation>A</variation>
    <location>
        <position position="431"/>
    </location>
</feature>
<feature type="mutagenesis site" description="Arrhythmic." evidence="38">
    <original>S</original>
    <variation>C</variation>
    <location>
        <position position="431"/>
    </location>
</feature>
<feature type="mutagenesis site" description="Poorly phosphorylated by itself or KaiA, mimics phosphorylation of this residue." evidence="21">
    <original>S</original>
    <variation>D</variation>
    <location>
        <position position="431"/>
    </location>
</feature>
<feature type="mutagenesis site" description="Severely attenuated growth after 5-7 days in a light/dark regime, glycogen degradation in dark stops early leaving high levels of glycogen in cell, mimics phosphorylation of this residue." evidence="30">
    <original>S</original>
    <variation>E</variation>
    <location>
        <position position="431"/>
    </location>
</feature>
<feature type="mutagenesis site" description="Loss of function. Significantly decreased phosphorylation in vivo, does not restore rhythmicity, hexamerizes, down-regulates operon. A single phosphorylated form occurs in vitro, accumulates in presence of KaiA, dephosphorylated in the presence of KaiA and KaiB, arrhythmic in vivo." evidence="12 13 14 21">
    <original>T</original>
    <variation>A</variation>
    <location>
        <position position="432"/>
    </location>
</feature>
<feature type="mutagenesis site" description="Not dephosphorylated, mimics phosphorylation of this residue. Arrhythmic in vitro." evidence="21 38">
    <original>T</original>
    <variation>E</variation>
    <location>
        <position position="432"/>
    </location>
</feature>
<feature type="mutagenesis site" description="Has in vitro phosphorylation, ATPase and KaiABC assembly-disassembly cycle with a period of 51 hours." evidence="38">
    <original>T</original>
    <variation>V</variation>
    <location>
        <position position="432"/>
    </location>
</feature>
<feature type="mutagenesis site" description="In kaiC12; extends the period of the circadian rhythm to 60 hours and increases the interaction with KaiA." evidence="39">
    <original>Y</original>
    <variation>H</variation>
    <location>
        <position position="442"/>
    </location>
</feature>
<feature type="mutagenesis site" description="Constitutively hyperphosphorylated, insensitive to KaiA or KaiB." evidence="24">
    <original>E</original>
    <variation>D</variation>
    <location>
        <position position="444"/>
    </location>
</feature>
<feature type="mutagenesis site" description="In kaiC13; induces an arrhythmic phenotype." evidence="39">
    <original>G</original>
    <variation>E</variation>
    <location>
        <position position="460"/>
    </location>
</feature>
<feature type="mutagenesis site" description="Loss of stable oscillation in presence of KaiA and KaiB." evidence="35">
    <original>W</original>
    <variation>F</variation>
    <location>
        <position position="462"/>
    </location>
</feature>
<feature type="mutagenesis site" description="Higher affinity for KaiB, extends the period of the circadian rhythm to 55 hours." evidence="28">
    <original>R</original>
    <variation>C</variation>
    <location>
        <position position="468"/>
    </location>
</feature>
<feature type="mutagenesis site" description="Shortens the period of the circadian rhythm to 17 hours in reconstituted KaiABC complex. Increased endogenous ATPase." evidence="15 22">
    <original>F</original>
    <variation>Y</variation>
    <location>
        <position position="470"/>
    </location>
</feature>
<feature type="mutagenesis site" description="Constitutively phosphorylated, insensitive to KaiB, dominant negative to wild-type, abolishes circadian rhythmicity." evidence="24">
    <location>
        <begin position="487"/>
        <end position="519"/>
    </location>
</feature>
<feature type="mutagenesis site" description="Constitutively phosphorylated." evidence="24">
    <original>E</original>
    <variation>A</variation>
    <location>
        <position position="487"/>
    </location>
</feature>
<feature type="mutagenesis site" description="In kaiC14; induces an arrhythmic phenotype. A different group shows shortens the period of the circadian rhythm to 14 hours, chromosome condensation periodicity is also 14 hours. Constitutively 80% phosphorylated." evidence="17 24 39">
    <original>T</original>
    <variation>A</variation>
    <location>
        <position position="495"/>
    </location>
</feature>
<feature type="mutagenesis site" description="Constitutively 80% phosphorylated." evidence="24">
    <location>
        <begin position="496"/>
        <end position="519"/>
    </location>
</feature>
<feature type="mutagenesis site" description="Low levels of phosphorylation, insensitive to KaiA, dominant negative to wild-type, abolishes circadian rhythmicity." evidence="24">
    <location>
        <begin position="497"/>
        <end position="519"/>
    </location>
</feature>
<feature type="helix" evidence="77">
    <location>
        <begin position="28"/>
        <end position="31"/>
    </location>
</feature>
<feature type="strand" evidence="77">
    <location>
        <begin position="34"/>
        <end position="37"/>
    </location>
</feature>
<feature type="strand" evidence="77">
    <location>
        <begin position="40"/>
        <end position="47"/>
    </location>
</feature>
<feature type="helix" evidence="77">
    <location>
        <begin position="52"/>
        <end position="67"/>
    </location>
</feature>
<feature type="strand" evidence="77">
    <location>
        <begin position="71"/>
        <end position="78"/>
    </location>
</feature>
<feature type="helix" evidence="77">
    <location>
        <begin position="80"/>
        <end position="87"/>
    </location>
</feature>
<feature type="helix" evidence="77">
    <location>
        <begin position="88"/>
        <end position="90"/>
    </location>
</feature>
<feature type="helix" evidence="77">
    <location>
        <begin position="94"/>
        <end position="99"/>
    </location>
</feature>
<feature type="strand" evidence="77">
    <location>
        <begin position="102"/>
        <end position="107"/>
    </location>
</feature>
<feature type="strand" evidence="74">
    <location>
        <begin position="119"/>
        <end position="121"/>
    </location>
</feature>
<feature type="helix" evidence="77">
    <location>
        <begin position="123"/>
        <end position="137"/>
    </location>
</feature>
<feature type="strand" evidence="77">
    <location>
        <begin position="140"/>
        <end position="145"/>
    </location>
</feature>
<feature type="helix" evidence="77">
    <location>
        <begin position="147"/>
        <end position="153"/>
    </location>
</feature>
<feature type="helix" evidence="77">
    <location>
        <begin position="157"/>
        <end position="174"/>
    </location>
</feature>
<feature type="strand" evidence="77">
    <location>
        <begin position="177"/>
        <end position="183"/>
    </location>
</feature>
<feature type="strand" evidence="78">
    <location>
        <begin position="187"/>
        <end position="189"/>
    </location>
</feature>
<feature type="strand" evidence="79">
    <location>
        <begin position="191"/>
        <end position="195"/>
    </location>
</feature>
<feature type="helix" evidence="77">
    <location>
        <begin position="197"/>
        <end position="200"/>
    </location>
</feature>
<feature type="strand" evidence="77">
    <location>
        <begin position="202"/>
        <end position="212"/>
    </location>
</feature>
<feature type="strand" evidence="77">
    <location>
        <begin position="215"/>
        <end position="225"/>
    </location>
</feature>
<feature type="strand" evidence="83">
    <location>
        <begin position="226"/>
        <end position="228"/>
    </location>
</feature>
<feature type="strand" evidence="77">
    <location>
        <begin position="233"/>
        <end position="240"/>
    </location>
</feature>
<feature type="strand" evidence="77">
    <location>
        <begin position="243"/>
        <end position="246"/>
    </location>
</feature>
<feature type="turn" evidence="81">
    <location>
        <begin position="249"/>
        <end position="251"/>
    </location>
</feature>
<feature type="helix" evidence="82">
    <location>
        <begin position="268"/>
        <end position="273"/>
    </location>
</feature>
<feature type="strand" evidence="81">
    <location>
        <begin position="276"/>
        <end position="281"/>
    </location>
</feature>
<feature type="strand" evidence="82">
    <location>
        <begin position="283"/>
        <end position="289"/>
    </location>
</feature>
<feature type="helix" evidence="82">
    <location>
        <begin position="294"/>
        <end position="306"/>
    </location>
</feature>
<feature type="turn" evidence="82">
    <location>
        <begin position="307"/>
        <end position="309"/>
    </location>
</feature>
<feature type="strand" evidence="82">
    <location>
        <begin position="312"/>
        <end position="319"/>
    </location>
</feature>
<feature type="helix" evidence="82">
    <location>
        <begin position="321"/>
        <end position="330"/>
    </location>
</feature>
<feature type="helix" evidence="82">
    <location>
        <begin position="335"/>
        <end position="340"/>
    </location>
</feature>
<feature type="strand" evidence="82">
    <location>
        <begin position="344"/>
        <end position="348"/>
    </location>
</feature>
<feature type="turn" evidence="82">
    <location>
        <begin position="351"/>
        <end position="353"/>
    </location>
</feature>
<feature type="helix" evidence="82">
    <location>
        <begin position="356"/>
        <end position="370"/>
    </location>
</feature>
<feature type="strand" evidence="82">
    <location>
        <begin position="373"/>
        <end position="378"/>
    </location>
</feature>
<feature type="helix" evidence="82">
    <location>
        <begin position="380"/>
        <end position="384"/>
    </location>
</feature>
<feature type="strand" evidence="73">
    <location>
        <begin position="385"/>
        <end position="387"/>
    </location>
</feature>
<feature type="helix" evidence="82">
    <location>
        <begin position="389"/>
        <end position="405"/>
    </location>
</feature>
<feature type="strand" evidence="82">
    <location>
        <begin position="409"/>
        <end position="415"/>
    </location>
</feature>
<feature type="strand" evidence="82">
    <location>
        <begin position="417"/>
        <end position="420"/>
    </location>
</feature>
<feature type="helix" evidence="82">
    <location>
        <begin position="421"/>
        <end position="426"/>
    </location>
</feature>
<feature type="turn" evidence="81">
    <location>
        <begin position="427"/>
        <end position="429"/>
    </location>
</feature>
<feature type="helix" evidence="82">
    <location>
        <begin position="430"/>
        <end position="432"/>
    </location>
</feature>
<feature type="strand" evidence="82">
    <location>
        <begin position="434"/>
        <end position="445"/>
    </location>
</feature>
<feature type="strand" evidence="82">
    <location>
        <begin position="448"/>
        <end position="458"/>
    </location>
</feature>
<feature type="strand" evidence="76">
    <location>
        <begin position="459"/>
        <end position="461"/>
    </location>
</feature>
<feature type="strand" evidence="82">
    <location>
        <begin position="468"/>
        <end position="473"/>
    </location>
</feature>
<feature type="strand" evidence="82">
    <location>
        <begin position="476"/>
        <end position="482"/>
    </location>
</feature>
<feature type="strand" evidence="84">
    <location>
        <begin position="484"/>
        <end position="487"/>
    </location>
</feature>
<feature type="helix" evidence="82">
    <location>
        <begin position="489"/>
        <end position="491"/>
    </location>
</feature>
<feature type="helix" evidence="80">
    <location>
        <begin position="501"/>
        <end position="512"/>
    </location>
</feature>
<feature type="strand" evidence="75">
    <location>
        <begin position="514"/>
        <end position="516"/>
    </location>
</feature>